<evidence type="ECO:0000250" key="1"/>
<evidence type="ECO:0000250" key="2">
    <source>
        <dbReference type="UniProtKB" id="P13405"/>
    </source>
</evidence>
<evidence type="ECO:0000250" key="3">
    <source>
        <dbReference type="UniProtKB" id="P33568"/>
    </source>
</evidence>
<evidence type="ECO:0000256" key="4">
    <source>
        <dbReference type="SAM" id="MobiDB-lite"/>
    </source>
</evidence>
<evidence type="ECO:0000269" key="5">
    <source>
    </source>
</evidence>
<evidence type="ECO:0000269" key="6">
    <source>
    </source>
</evidence>
<evidence type="ECO:0000269" key="7">
    <source>
    </source>
</evidence>
<evidence type="ECO:0000269" key="8">
    <source>
    </source>
</evidence>
<evidence type="ECO:0000269" key="9">
    <source>
    </source>
</evidence>
<evidence type="ECO:0000269" key="10">
    <source>
    </source>
</evidence>
<evidence type="ECO:0000269" key="11">
    <source>
    </source>
</evidence>
<evidence type="ECO:0000269" key="12">
    <source>
    </source>
</evidence>
<evidence type="ECO:0000269" key="13">
    <source>
    </source>
</evidence>
<evidence type="ECO:0000269" key="14">
    <source>
    </source>
</evidence>
<evidence type="ECO:0000269" key="15">
    <source>
    </source>
</evidence>
<evidence type="ECO:0000269" key="16">
    <source>
    </source>
</evidence>
<evidence type="ECO:0000269" key="17">
    <source>
    </source>
</evidence>
<evidence type="ECO:0000269" key="18">
    <source>
    </source>
</evidence>
<evidence type="ECO:0000269" key="19">
    <source>
    </source>
</evidence>
<evidence type="ECO:0000269" key="20">
    <source>
    </source>
</evidence>
<evidence type="ECO:0000269" key="21">
    <source>
    </source>
</evidence>
<evidence type="ECO:0000269" key="22">
    <source>
    </source>
</evidence>
<evidence type="ECO:0000269" key="23">
    <source>
    </source>
</evidence>
<evidence type="ECO:0000269" key="24">
    <source>
    </source>
</evidence>
<evidence type="ECO:0000269" key="25">
    <source>
    </source>
</evidence>
<evidence type="ECO:0000269" key="26">
    <source>
    </source>
</evidence>
<evidence type="ECO:0000269" key="27">
    <source>
    </source>
</evidence>
<evidence type="ECO:0000269" key="28">
    <source>
    </source>
</evidence>
<evidence type="ECO:0000269" key="29">
    <source>
    </source>
</evidence>
<evidence type="ECO:0000269" key="30">
    <source>
    </source>
</evidence>
<evidence type="ECO:0000269" key="31">
    <source>
    </source>
</evidence>
<evidence type="ECO:0000269" key="32">
    <source>
    </source>
</evidence>
<evidence type="ECO:0000269" key="33">
    <source>
    </source>
</evidence>
<evidence type="ECO:0000269" key="34">
    <source>
    </source>
</evidence>
<evidence type="ECO:0000269" key="35">
    <source>
    </source>
</evidence>
<evidence type="ECO:0000269" key="36">
    <source>
    </source>
</evidence>
<evidence type="ECO:0000269" key="37">
    <source>
    </source>
</evidence>
<evidence type="ECO:0000269" key="38">
    <source>
    </source>
</evidence>
<evidence type="ECO:0000269" key="39">
    <source>
    </source>
</evidence>
<evidence type="ECO:0000269" key="40">
    <source>
    </source>
</evidence>
<evidence type="ECO:0000269" key="41">
    <source>
    </source>
</evidence>
<evidence type="ECO:0000269" key="42">
    <source>
    </source>
</evidence>
<evidence type="ECO:0000269" key="43">
    <source>
    </source>
</evidence>
<evidence type="ECO:0000269" key="44">
    <source>
    </source>
</evidence>
<evidence type="ECO:0000269" key="45">
    <source>
    </source>
</evidence>
<evidence type="ECO:0000269" key="46">
    <source>
    </source>
</evidence>
<evidence type="ECO:0000269" key="47">
    <source>
    </source>
</evidence>
<evidence type="ECO:0000269" key="48">
    <source>
    </source>
</evidence>
<evidence type="ECO:0000269" key="49">
    <source>
    </source>
</evidence>
<evidence type="ECO:0000269" key="50">
    <source>
    </source>
</evidence>
<evidence type="ECO:0000269" key="51">
    <source>
    </source>
</evidence>
<evidence type="ECO:0000269" key="52">
    <source>
    </source>
</evidence>
<evidence type="ECO:0000269" key="53">
    <source>
    </source>
</evidence>
<evidence type="ECO:0000269" key="54">
    <source>
    </source>
</evidence>
<evidence type="ECO:0000269" key="55">
    <source>
    </source>
</evidence>
<evidence type="ECO:0000269" key="56">
    <source>
    </source>
</evidence>
<evidence type="ECO:0000269" key="57">
    <source>
    </source>
</evidence>
<evidence type="ECO:0000269" key="58">
    <source>
    </source>
</evidence>
<evidence type="ECO:0000269" key="59">
    <source>
    </source>
</evidence>
<evidence type="ECO:0000269" key="60">
    <source>
    </source>
</evidence>
<evidence type="ECO:0000269" key="61">
    <source>
    </source>
</evidence>
<evidence type="ECO:0000269" key="62">
    <source>
    </source>
</evidence>
<evidence type="ECO:0000269" key="63">
    <source>
    </source>
</evidence>
<evidence type="ECO:0000269" key="64">
    <source>
    </source>
</evidence>
<evidence type="ECO:0000269" key="65">
    <source>
    </source>
</evidence>
<evidence type="ECO:0000269" key="66">
    <source>
    </source>
</evidence>
<evidence type="ECO:0000269" key="67">
    <source>
    </source>
</evidence>
<evidence type="ECO:0000269" key="68">
    <source ref="7"/>
</evidence>
<evidence type="ECO:0000303" key="69">
    <source>
    </source>
</evidence>
<evidence type="ECO:0000305" key="70"/>
<evidence type="ECO:0007744" key="71">
    <source>
    </source>
</evidence>
<evidence type="ECO:0007744" key="72">
    <source>
    </source>
</evidence>
<evidence type="ECO:0007744" key="73">
    <source>
    </source>
</evidence>
<evidence type="ECO:0007744" key="74">
    <source>
    </source>
</evidence>
<evidence type="ECO:0007744" key="75">
    <source>
    </source>
</evidence>
<evidence type="ECO:0007744" key="76">
    <source>
    </source>
</evidence>
<evidence type="ECO:0007744" key="77">
    <source>
    </source>
</evidence>
<evidence type="ECO:0007829" key="78">
    <source>
        <dbReference type="PDB" id="1N4M"/>
    </source>
</evidence>
<evidence type="ECO:0007829" key="79">
    <source>
        <dbReference type="PDB" id="2AZE"/>
    </source>
</evidence>
<evidence type="ECO:0007829" key="80">
    <source>
        <dbReference type="PDB" id="2QDJ"/>
    </source>
</evidence>
<evidence type="ECO:0007829" key="81">
    <source>
        <dbReference type="PDB" id="2R7G"/>
    </source>
</evidence>
<evidence type="ECO:0007829" key="82">
    <source>
        <dbReference type="PDB" id="4ELJ"/>
    </source>
</evidence>
<evidence type="ECO:0007829" key="83">
    <source>
        <dbReference type="PDB" id="4ELL"/>
    </source>
</evidence>
<name>RB_HUMAN</name>
<keyword id="KW-0002">3D-structure</keyword>
<keyword id="KW-0007">Acetylation</keyword>
<keyword id="KW-0131">Cell cycle</keyword>
<keyword id="KW-0156">Chromatin regulator</keyword>
<keyword id="KW-0963">Cytoplasm</keyword>
<keyword id="KW-0903">Direct protein sequencing</keyword>
<keyword id="KW-0225">Disease variant</keyword>
<keyword id="KW-0238">DNA-binding</keyword>
<keyword id="KW-0945">Host-virus interaction</keyword>
<keyword id="KW-0488">Methylation</keyword>
<keyword id="KW-0539">Nucleus</keyword>
<keyword id="KW-0597">Phosphoprotein</keyword>
<keyword id="KW-1267">Proteomics identification</keyword>
<keyword id="KW-1185">Reference proteome</keyword>
<keyword id="KW-0678">Repressor</keyword>
<keyword id="KW-0804">Transcription</keyword>
<keyword id="KW-0805">Transcription regulation</keyword>
<keyword id="KW-0043">Tumor suppressor</keyword>
<comment type="function">
    <text evidence="2 3 8 26">Tumor suppressor that is a key regulator of the G1/S transition of the cell cycle (PubMed:10499802). The hypophosphorylated form binds transcription regulators of the E2F family, preventing transcription of E2F-responsive genes (PubMed:10499802). Both physically blocks E2Fs transactivating domain and recruits chromatin-modifying enzymes that actively repress transcription (PubMed:10499802). Cyclin and CDK-dependent phosphorylation of RB1 induces its dissociation from E2Fs, thereby activating transcription of E2F responsive genes and triggering entry into S phase (PubMed:10499802). RB1 also promotes the G0-G1 transition upon phosphorylation and activation by CDK3/cyclin-C (PubMed:15084261). Directly involved in heterochromatin formation by maintaining overall chromatin structure and, in particular, that of constitutive heterochromatin by stabilizing histone methylation. Recruits and targets histone methyltransferases SUV39H1, KMT5B and KMT5C, leading to epigenetic transcriptional repression. Controls histone H4 'Lys-20' trimethylation. Inhibits the intrinsic kinase activity of TAF1. Mediates transcriptional repression by SMARCA4/BRG1 by recruiting a histone deacetylase (HDAC) complex to the c-FOS promoter. In resting neurons, transcription of the c-FOS promoter is inhibited by BRG1-dependent recruitment of a phospho-RB1-HDAC1 repressor complex. Upon calcium influx, RB1 is dephosphorylated by calcineurin, which leads to release of the repressor complex (By similarity).</text>
</comment>
<comment type="function">
    <text evidence="24 40 42 50 63">(Microbial infection) In case of viral infections, interactions with SV40 large T antigen, HPV E7 protein or adenovirus E1A protein induce the disassembly of RB1-E2F1 complex thereby disrupting RB1's activity.</text>
</comment>
<comment type="subunit">
    <text evidence="2 3 5 6 7 10 11 12 13 14 16 17 18 19 20 22 23 27 28 29 30 32 33 34 35 36 37 38 41 43 44 45 49 51 55 58 60 66">The hypophosphorylated form interacts with and sequesters the E2F1 transcription factor, thereby inhibiting E2F1 transcription (PubMed:20940255, PubMed:8336704). Interacts with heterodimeric E2F/DP transcription factor complexes containing TFDP1 and either E2F1, E2F3, E2F4 or E2F5, or TFDP2 and E2F4. Interacts (when hyperphosphorylated and hypophosphorylated) with PKP3; the interaction inhibits RB1 interaction with and repression of the transcription factor E2F1, potentially via sequestering RB1 to the cytoplasm (By similarity). The unphosphorylated form interacts with EID1, ARID3B, KDM5A, SUV39H1, MJD2A/JHDM3A and THOC1. Interacts with the N-terminal domain of TAF1. Interacts with SNW1, ATAD5, AATF, DNMT1, LIN9, LMNA, KMT5B, KMT5C, PELP1, UHRF2 and TMPO-alpha. Interacts with GRIP1 and UBR4. Interacts with ARID4A and KDM5B. Interacts with E4F1 and LIMD1. Interacts with SMARCA4/BRG1 and HDAC1 (By similarity). Interacts with PSMA3 and USP4. Interacts (when methylated at Lys-860) with L3MBTL1. Interacts with CHEK2; phosphorylates RB1. Interacts with CDK1 and CDK2 (By similarity). Interacts with PRMT2. Interacts with CEBPA (PubMed:15107404). P-TEFB complex interacts with RB1; promotes phosphorylation of RB1 (PubMed:12037672). Interacts with RBBP9; the interaction disrupts RB1 binding to E2F1 (By similarity). Interacts with KAT2B/PCAF and EP300/P300 (By similarity). Interacts with PAX5 (PubMed:10197586). Interacts (phosphorylated and unphosphorylated) with BLCAP (PubMed:26986503). May interact with NDC80.</text>
</comment>
<comment type="subunit">
    <text evidence="40">(Microbial infection) Interacts with adenovirus E1A protein.</text>
</comment>
<comment type="subunit">
    <text evidence="24">(Microbial infection) Interacts with HPV E7 protein.</text>
</comment>
<comment type="subunit">
    <text evidence="24 50">(Microbial infection) Interacts with SV40 large T antigen.</text>
</comment>
<comment type="subunit">
    <text evidence="21 63">(Microbial infection) Interacts with human cytomegalovirus/HHV-5 proteins UL82 and UL123.</text>
</comment>
<comment type="subunit">
    <text evidence="42">(Microbial infection) Interacts with molluscum contagiosum virus protein MC007.</text>
</comment>
<comment type="interaction">
    <interactant intactId="EBI-491274">
        <id>P06400</id>
    </interactant>
    <interactant intactId="EBI-528269">
        <id>Q9UKV8</id>
        <label>AGO2</label>
    </interactant>
    <organismsDiffer>false</organismsDiffer>
    <experiments>3</experiments>
</comment>
<comment type="interaction">
    <interactant intactId="EBI-491274">
        <id>P06400</id>
    </interactant>
    <interactant intactId="EBI-395261">
        <id>P24863</id>
        <label>CCNC</label>
    </interactant>
    <organismsDiffer>false</organismsDiffer>
    <experiments>4</experiments>
</comment>
<comment type="interaction">
    <interactant intactId="EBI-491274">
        <id>P06400</id>
    </interactant>
    <interactant intactId="EBI-375096">
        <id>P24941</id>
        <label>CDK2</label>
    </interactant>
    <organismsDiffer>false</organismsDiffer>
    <experiments>3</experiments>
</comment>
<comment type="interaction">
    <interactant intactId="EBI-491274">
        <id>P06400</id>
    </interactant>
    <interactant intactId="EBI-974488">
        <id>O14757</id>
        <label>CHEK1</label>
    </interactant>
    <organismsDiffer>false</organismsDiffer>
    <experiments>3</experiments>
</comment>
<comment type="interaction">
    <interactant intactId="EBI-491274">
        <id>P06400</id>
    </interactant>
    <interactant intactId="EBI-1180783">
        <id>O96017</id>
        <label>CHEK2</label>
    </interactant>
    <organismsDiffer>false</organismsDiffer>
    <experiments>3</experiments>
</comment>
<comment type="interaction">
    <interactant intactId="EBI-491274">
        <id>P06400</id>
    </interactant>
    <interactant intactId="EBI-715527">
        <id>Q13574-2</id>
        <label>DGKZ</label>
    </interactant>
    <organismsDiffer>false</organismsDiffer>
    <experiments>6</experiments>
</comment>
<comment type="interaction">
    <interactant intactId="EBI-491274">
        <id>P06400</id>
    </interactant>
    <interactant intactId="EBI-1053596">
        <id>Q13627</id>
        <label>DYRK1A</label>
    </interactant>
    <organismsDiffer>false</organismsDiffer>
    <experiments>4</experiments>
</comment>
<comment type="interaction">
    <interactant intactId="EBI-491274">
        <id>P06400</id>
    </interactant>
    <interactant intactId="EBI-634187">
        <id>Q9Y463</id>
        <label>DYRK1B</label>
    </interactant>
    <organismsDiffer>false</organismsDiffer>
    <experiments>4</experiments>
</comment>
<comment type="interaction">
    <interactant intactId="EBI-491274">
        <id>P06400</id>
    </interactant>
    <interactant intactId="EBI-448924">
        <id>Q01094</id>
        <label>E2F1</label>
    </interactant>
    <organismsDiffer>false</organismsDiffer>
    <experiments>29</experiments>
</comment>
<comment type="interaction">
    <interactant intactId="EBI-491274">
        <id>P06400</id>
    </interactant>
    <interactant intactId="EBI-718476">
        <id>Q14209</id>
        <label>E2F2</label>
    </interactant>
    <organismsDiffer>false</organismsDiffer>
    <experiments>5</experiments>
</comment>
<comment type="interaction">
    <interactant intactId="EBI-491274">
        <id>P06400</id>
    </interactant>
    <interactant intactId="EBI-765551">
        <id>O00716</id>
        <label>E2F3</label>
    </interactant>
    <organismsDiffer>false</organismsDiffer>
    <experiments>5</experiments>
</comment>
<comment type="interaction">
    <interactant intactId="EBI-491274">
        <id>P06400</id>
    </interactant>
    <interactant intactId="EBI-448943">
        <id>Q16254</id>
        <label>E2F4</label>
    </interactant>
    <organismsDiffer>false</organismsDiffer>
    <experiments>6</experiments>
</comment>
<comment type="interaction">
    <interactant intactId="EBI-491274">
        <id>P06400</id>
    </interactant>
    <interactant intactId="EBI-1389773">
        <id>Q15329</id>
        <label>E2F5</label>
    </interactant>
    <organismsDiffer>false</organismsDiffer>
    <experiments>2</experiments>
</comment>
<comment type="interaction">
    <interactant intactId="EBI-491274">
        <id>P06400</id>
    </interactant>
    <interactant intactId="EBI-1644164">
        <id>O43524</id>
        <label>FOXO3</label>
    </interactant>
    <organismsDiffer>false</organismsDiffer>
    <experiments>2</experiments>
</comment>
<comment type="interaction">
    <interactant intactId="EBI-491274">
        <id>P06400</id>
    </interactant>
    <interactant intactId="EBI-1383583">
        <id>P42685</id>
        <label>FRK</label>
    </interactant>
    <organismsDiffer>false</organismsDiffer>
    <experiments>3</experiments>
</comment>
<comment type="interaction">
    <interactant intactId="EBI-491274">
        <id>P06400</id>
    </interactant>
    <interactant intactId="EBI-3909284">
        <id>P15976</id>
        <label>GATA1</label>
    </interactant>
    <organismsDiffer>false</organismsDiffer>
    <experiments>2</experiments>
</comment>
<comment type="interaction">
    <interactant intactId="EBI-491274">
        <id>P06400</id>
    </interactant>
    <interactant intactId="EBI-401755">
        <id>P62993</id>
        <label>GRB2</label>
    </interactant>
    <organismsDiffer>false</organismsDiffer>
    <experiments>4</experiments>
</comment>
<comment type="interaction">
    <interactant intactId="EBI-491274">
        <id>P06400</id>
    </interactant>
    <interactant intactId="EBI-954175">
        <id>O60381</id>
        <label>HBP1</label>
    </interactant>
    <organismsDiffer>false</organismsDiffer>
    <experiments>2</experiments>
</comment>
<comment type="interaction">
    <interactant intactId="EBI-491274">
        <id>P06400</id>
    </interactant>
    <interactant intactId="EBI-301834">
        <id>Q13547</id>
        <label>HDAC1</label>
    </interactant>
    <organismsDiffer>false</organismsDiffer>
    <experiments>16</experiments>
</comment>
<comment type="interaction">
    <interactant intactId="EBI-491274">
        <id>P06400</id>
    </interactant>
    <interactant intactId="EBI-2650369">
        <id>Q14653</id>
        <label>IRF3</label>
    </interactant>
    <organismsDiffer>false</organismsDiffer>
    <experiments>2</experiments>
</comment>
<comment type="interaction">
    <interactant intactId="EBI-491274">
        <id>P06400</id>
    </interactant>
    <interactant intactId="EBI-1560836">
        <id>P29375</id>
        <label>KDM5A</label>
    </interactant>
    <organismsDiffer>false</organismsDiffer>
    <experiments>2</experiments>
</comment>
<comment type="interaction">
    <interactant intactId="EBI-491274">
        <id>P06400</id>
    </interactant>
    <interactant intactId="EBI-73946">
        <id>Q16539</id>
        <label>MAPK14</label>
    </interactant>
    <organismsDiffer>false</organismsDiffer>
    <experiments>4</experiments>
</comment>
<comment type="interaction">
    <interactant intactId="EBI-491274">
        <id>P06400</id>
    </interactant>
    <interactant intactId="EBI-389668">
        <id>Q00987</id>
        <label>MDM2</label>
    </interactant>
    <organismsDiffer>false</organismsDiffer>
    <experiments>5</experiments>
</comment>
<comment type="interaction">
    <interactant intactId="EBI-491274">
        <id>P06400</id>
    </interactant>
    <interactant intactId="EBI-398437">
        <id>O15151</id>
        <label>MDM4</label>
    </interactant>
    <organismsDiffer>false</organismsDiffer>
    <experiments>4</experiments>
</comment>
<comment type="interaction">
    <interactant intactId="EBI-491274">
        <id>P06400</id>
    </interactant>
    <interactant intactId="EBI-750085">
        <id>Q9Y676</id>
        <label>MRPS18B</label>
    </interactant>
    <organismsDiffer>false</organismsDiffer>
    <experiments>2</experiments>
</comment>
<comment type="interaction">
    <interactant intactId="EBI-491274">
        <id>P06400</id>
    </interactant>
    <interactant intactId="EBI-78670">
        <id>Q14686</id>
        <label>NCOA6</label>
    </interactant>
    <organismsDiffer>false</organismsDiffer>
    <experiments>3</experiments>
</comment>
<comment type="interaction">
    <interactant intactId="EBI-491274">
        <id>P06400</id>
    </interactant>
    <interactant intactId="EBI-1105035">
        <id>P07197</id>
        <label>NEFM</label>
    </interactant>
    <organismsDiffer>false</organismsDiffer>
    <experiments>2</experiments>
</comment>
<comment type="interaction">
    <interactant intactId="EBI-491274">
        <id>P06400</id>
    </interactant>
    <interactant intactId="EBI-924893">
        <id>Q9UQ80</id>
        <label>PA2G4</label>
    </interactant>
    <organismsDiffer>false</organismsDiffer>
    <experiments>4</experiments>
</comment>
<comment type="interaction">
    <interactant intactId="EBI-491274">
        <id>P06400</id>
    </interactant>
    <interactant intactId="EBI-357253">
        <id>P62136</id>
        <label>PPP1CA</label>
    </interactant>
    <organismsDiffer>false</organismsDiffer>
    <experiments>2</experiments>
</comment>
<comment type="interaction">
    <interactant intactId="EBI-491274">
        <id>P06400</id>
    </interactant>
    <interactant intactId="EBI-78458">
        <id>P55345</id>
        <label>PRMT2</label>
    </interactant>
    <organismsDiffer>false</organismsDiffer>
    <experiments>3</experiments>
</comment>
<comment type="interaction">
    <interactant intactId="EBI-491274">
        <id>P06400</id>
    </interactant>
    <interactant intactId="EBI-1045860">
        <id>Q00577</id>
        <label>PURA</label>
    </interactant>
    <organismsDiffer>false</organismsDiffer>
    <experiments>6</experiments>
</comment>
<comment type="interaction">
    <interactant intactId="EBI-491274">
        <id>P06400</id>
    </interactant>
    <interactant intactId="EBI-365996">
        <id>P04049</id>
        <label>RAF1</label>
    </interactant>
    <organismsDiffer>false</organismsDiffer>
    <experiments>3</experiments>
</comment>
<comment type="interaction">
    <interactant intactId="EBI-491274">
        <id>P06400</id>
    </interactant>
    <interactant intactId="EBI-491274">
        <id>P06400</id>
        <label>RB1</label>
    </interactant>
    <organismsDiffer>false</organismsDiffer>
    <experiments>3</experiments>
</comment>
<comment type="interaction">
    <interactant intactId="EBI-491274">
        <id>P06400</id>
    </interactant>
    <interactant intactId="EBI-745715">
        <id>Q99708</id>
        <label>RBBP8</label>
    </interactant>
    <organismsDiffer>false</organismsDiffer>
    <experiments>2</experiments>
</comment>
<comment type="interaction">
    <interactant intactId="EBI-491274">
        <id>P06400</id>
    </interactant>
    <interactant intactId="EBI-744408">
        <id>O75150</id>
        <label>RNF40</label>
    </interactant>
    <organismsDiffer>false</organismsDiffer>
    <experiments>3</experiments>
</comment>
<comment type="interaction">
    <interactant intactId="EBI-491274">
        <id>P06400</id>
    </interactant>
    <interactant intactId="EBI-1268586">
        <id>Q8WTS6</id>
        <label>SETD7</label>
    </interactant>
    <organismsDiffer>false</organismsDiffer>
    <experiments>4</experiments>
</comment>
<comment type="interaction">
    <interactant intactId="EBI-491274">
        <id>P06400</id>
    </interactant>
    <interactant intactId="EBI-625304">
        <id>Q96PU4</id>
        <label>UHRF2</label>
    </interactant>
    <organismsDiffer>false</organismsDiffer>
    <experiments>4</experiments>
</comment>
<comment type="interaction">
    <interactant intactId="EBI-491274">
        <id>P06400</id>
    </interactant>
    <interactant intactId="EBI-302474">
        <id>Q93009</id>
        <label>USP7</label>
    </interactant>
    <organismsDiffer>false</organismsDiffer>
    <experiments>8</experiments>
</comment>
<comment type="interaction">
    <interactant intactId="EBI-491274">
        <id>P06400</id>
    </interactant>
    <interactant intactId="EBI-847225">
        <id>P30285</id>
        <label>Cdk4</label>
    </interactant>
    <organismsDiffer>true</organismsDiffer>
    <experiments>2</experiments>
</comment>
<comment type="interaction">
    <interactant intactId="EBI-491274">
        <id>P06400</id>
    </interactant>
    <interactant intactId="EBI-2211248">
        <id>Q155P7</id>
        <label>Cenpf</label>
    </interactant>
    <organismsDiffer>true</organismsDiffer>
    <experiments>4</experiments>
</comment>
<comment type="interaction">
    <interactant intactId="EBI-491274">
        <id>P06400</id>
    </interactant>
    <interactant intactId="EBI-7014709">
        <id>A0MPS7</id>
        <label>E7</label>
    </interactant>
    <organismsDiffer>true</organismsDiffer>
    <experiments>2</experiments>
</comment>
<comment type="interaction">
    <interactant intactId="EBI-491274">
        <id>P06400</id>
    </interactant>
    <interactant intactId="EBI-866453">
        <id>P03129</id>
        <label>E7</label>
    </interactant>
    <organismsDiffer>true</organismsDiffer>
    <experiments>23</experiments>
</comment>
<comment type="interaction">
    <interactant intactId="EBI-491274">
        <id>P06400</id>
    </interactant>
    <interactant intactId="EBI-7005254">
        <id>P04020</id>
        <label>E7</label>
    </interactant>
    <organismsDiffer>true</organismsDiffer>
    <experiments>3</experiments>
</comment>
<comment type="interaction">
    <interactant intactId="EBI-491274">
        <id>P06400</id>
    </interactant>
    <interactant intactId="EBI-6944797">
        <id>P06464</id>
        <label>E7</label>
    </interactant>
    <organismsDiffer>true</organismsDiffer>
    <experiments>3</experiments>
</comment>
<comment type="interaction">
    <interactant intactId="EBI-491274">
        <id>P06400</id>
    </interactant>
    <interactant intactId="EBI-963841">
        <id>P06465</id>
        <label>E7</label>
    </interactant>
    <organismsDiffer>true</organismsDiffer>
    <experiments>3</experiments>
</comment>
<comment type="interaction">
    <interactant intactId="EBI-491274">
        <id>P06400</id>
    </interactant>
    <interactant intactId="EBI-1776887">
        <id>P06788</id>
        <label>E7</label>
    </interactant>
    <organismsDiffer>true</organismsDiffer>
    <experiments>4</experiments>
</comment>
<comment type="interaction">
    <interactant intactId="EBI-491274">
        <id>P06400</id>
    </interactant>
    <interactant intactId="EBI-912574">
        <id>P52927</id>
        <label>Hmga2</label>
    </interactant>
    <organismsDiffer>true</organismsDiffer>
    <experiments>5</experiments>
</comment>
<comment type="interaction">
    <interactant intactId="EBI-491274">
        <id>P06400</id>
    </interactant>
    <interactant intactId="EBI-3043899">
        <id>Q9R002</id>
        <label>Ifi202</label>
    </interactant>
    <organismsDiffer>true</organismsDiffer>
    <experiments>5</experiments>
</comment>
<comment type="interaction">
    <interactant intactId="EBI-491274">
        <id>P06400</id>
    </interactant>
    <interactant intactId="EBI-6506625">
        <id>Q8VSP9</id>
        <label>ospF</label>
    </interactant>
    <organismsDiffer>true</organismsDiffer>
    <experiments>2</experiments>
</comment>
<comment type="interaction">
    <interactant intactId="EBI-491274">
        <id>P06400</id>
    </interactant>
    <interactant intactId="EBI-8377084">
        <id>Q9Z2X2</id>
        <label>Psmd10</label>
    </interactant>
    <organismsDiffer>true</organismsDiffer>
    <experiments>3</experiments>
</comment>
<comment type="interaction">
    <interactant intactId="EBI-491274">
        <id>P06400</id>
    </interactant>
    <interactant intactId="EBI-25487301">
        <id>PRO_0000037321</id>
        <label>rep</label>
        <dbReference type="UniProtKB" id="P0C6X7"/>
    </interactant>
    <organismsDiffer>true</organismsDiffer>
    <experiments>3</experiments>
</comment>
<comment type="interaction">
    <interactant intactId="EBI-491274">
        <id>P06400</id>
    </interactant>
    <interactant intactId="EBI-1802585">
        <id>Q923E4</id>
        <label>Sirt1</label>
    </interactant>
    <organismsDiffer>true</organismsDiffer>
    <experiments>4</experiments>
</comment>
<comment type="interaction">
    <interactant intactId="EBI-491274">
        <id>P06400</id>
    </interactant>
    <interactant intactId="EBI-1210244">
        <id>Q3TKT4</id>
        <label>Smarca4</label>
    </interactant>
    <organismsDiffer>true</organismsDiffer>
    <experiments>4</experiments>
</comment>
<comment type="interaction">
    <interactant intactId="EBI-491274">
        <id>P06400</id>
    </interactant>
    <interactant intactId="EBI-617698">
        <id>P03070</id>
    </interactant>
    <organismsDiffer>true</organismsDiffer>
    <experiments>6</experiments>
</comment>
<comment type="interaction">
    <interactant intactId="EBI-491274">
        <id>P06400</id>
    </interactant>
    <interactant intactId="EBI-8599077">
        <id>P03254</id>
    </interactant>
    <organismsDiffer>true</organismsDiffer>
    <experiments>3</experiments>
</comment>
<comment type="interaction">
    <interactant intactId="EBI-491274">
        <id>P06400</id>
    </interactant>
    <interactant intactId="EBI-2603114">
        <id>P03255</id>
    </interactant>
    <organismsDiffer>true</organismsDiffer>
    <experiments>10</experiments>
</comment>
<comment type="interaction">
    <interactant intactId="EBI-491274">
        <id>P06400</id>
    </interactant>
    <interactant intactId="EBI-6692439">
        <id>P03255-1</id>
    </interactant>
    <organismsDiffer>true</organismsDiffer>
    <experiments>2</experiments>
</comment>
<comment type="interaction">
    <interactant intactId="EBI-491274">
        <id>P06400</id>
    </interactant>
    <interactant intactId="EBI-6859460">
        <id>P03255-2</id>
    </interactant>
    <organismsDiffer>true</organismsDiffer>
    <experiments>3</experiments>
</comment>
<comment type="interaction">
    <interactant intactId="EBI-491274">
        <id>P06400</id>
    </interactant>
    <interactant intactId="EBI-2568719">
        <id>PRO_0000041225</id>
        <dbReference type="UniProtKB" id="Q86500"/>
    </interactant>
    <organismsDiffer>true</organismsDiffer>
    <experiments>3</experiments>
</comment>
<comment type="subcellular location">
    <subcellularLocation>
        <location evidence="44">Nucleus</location>
    </subcellularLocation>
    <subcellularLocation>
        <location evidence="2">Cytoplasm</location>
    </subcellularLocation>
    <text evidence="2 44">During keratinocyte differentiation, acetylation by KAT2B/PCAF is required for nuclear localization (PubMed:20940255). Localizes to the cytoplasm when hyperphosphorylated (By similarity).</text>
</comment>
<comment type="tissue specificity">
    <text evidence="44">Expressed in the retina. Expressed in foreskin keratinocytes (at protein level) (PubMed:20940255).</text>
</comment>
<comment type="domain">
    <text>The Pocket domain binds to the threonine-phosphorylated domain C, thereby preventing interaction with heterodimeric E2F/DP transcription factor complexes.</text>
</comment>
<comment type="PTM">
    <text evidence="8 56">Phosphorylated by CDK6 and CDK4, and subsequently by CDK2 at Ser-567 in G1, thereby releasing E2F1 which is then able to activate cell growth. Dephosphorylated at the late M phase. SV40 large T antigen, HPV E7 and adenovirus E1A bind to the underphosphorylated, active form of pRb. Phosphorylation at Thr-821 and Thr-826 promotes interaction between the C-terminal domain C and the Pocket domain, and thereby inhibits interactions with heterodimeric E2F/DP transcription factor complexes. Dephosphorylated at Ser-795 by calcineruin upon calcium stimulation. CDK3/cyclin-C-mediated phosphorylation at Ser-807 and Ser-811 is required for G0-G1 transition. Phosphorylated by CDK1 and CDK2 upon TGFB1-mediated apoptosis.</text>
</comment>
<comment type="PTM">
    <text evidence="1 26 31 36 38 39 43 46">N-terminus is methylated by METTL11A/NTM1 (By similarity). Monomethylation at Lys-810 by SMYD2 enhances phosphorylation at Ser-807 and Ser-811, and promotes cell cycle progression. Monomethylation at Lys-860 by SMYD2 promotes interaction with L3MBTL1.</text>
</comment>
<comment type="PTM">
    <text evidence="44">Acetylated during keratinocyte differentiation. Acetylation at Lys-873 and Lys-874 regulates subcellular localization. Can be deacetylated by SIRT1.</text>
</comment>
<comment type="disease" evidence="9 15 25 48 52 53 54 57 59 61 62 64 65 67">
    <disease id="DI-01340">
        <name>Childhood cancer retinoblastoma</name>
        <acronym>RB</acronym>
        <description>Congenital malignant tumor that arises from the nuclear layers of the retina. It occurs in about 1:20'000 live births and represents about 2% of childhood malignancies. It is bilateral in about 30% of cases. Although most RB appear sporadically, about 20% are transmitted as an autosomal dominant trait with incomplete penetrance. The diagnosis is usually made before the age of 2 years when strabismus or a gray to yellow reflex from pupil ('cat eye') is investigated.</description>
        <dbReference type="MIM" id="180200"/>
    </disease>
    <text>The disease is caused by variants affecting the gene represented in this entry.</text>
</comment>
<comment type="disease">
    <disease id="DI-02612">
        <name>Bladder cancer</name>
        <acronym>BLC</acronym>
        <description>A malignancy originating in tissues of the urinary bladder. It often presents with multiple tumors appearing at different times and at different sites in the bladder. Most bladder cancers are transitional cell carcinomas that begin in cells that normally make up the inner lining of the bladder. Other types of bladder cancer include squamous cell carcinoma (cancer that begins in thin, flat cells) and adenocarcinoma (cancer that begins in cells that make and release mucus and other fluids). Bladder cancer is a complex disorder with both genetic and environmental influences.</description>
        <dbReference type="MIM" id="109800"/>
    </disease>
    <text>Disease susceptibility is associated with variants affecting the gene represented in this entry.</text>
</comment>
<comment type="disease">
    <disease id="DI-02109">
        <name>Osteogenic sarcoma</name>
        <acronym>OSRC</acronym>
        <description>A sarcoma originating in bone-forming cells, affecting the ends of long bones.</description>
        <dbReference type="MIM" id="259500"/>
    </disease>
    <text>The disease is caused by variants affecting the gene represented in this entry.</text>
</comment>
<comment type="similarity">
    <text evidence="70">Belongs to the retinoblastoma protein (RB) family.</text>
</comment>
<comment type="online information" name="RB1base">
    <link uri="http://rb1-lsdb.d-lohmann.de/"/>
    <text>RB1 mutation db</text>
</comment>
<comment type="online information" name="Atlas of Genetics and Cytogenetics in Oncology and Haematology">
    <link uri="https://atlasgeneticsoncology.org/gene/90/RB1"/>
</comment>
<comment type="online information" name="Wikipedia">
    <link uri="https://en.wikipedia.org/wiki/Retinoblastoma_protein"/>
    <text>Retinoblastoma protein entry</text>
</comment>
<proteinExistence type="evidence at protein level"/>
<feature type="initiator methionine" description="Removed" evidence="2">
    <location>
        <position position="1"/>
    </location>
</feature>
<feature type="chain" id="PRO_0000167836" description="Retinoblastoma-associated protein">
    <location>
        <begin position="2"/>
        <end position="928"/>
    </location>
</feature>
<feature type="region of interest" description="Disordered" evidence="4">
    <location>
        <begin position="1"/>
        <end position="42"/>
    </location>
</feature>
<feature type="region of interest" description="Pocket; binds T and E1A">
    <location>
        <begin position="373"/>
        <end position="771"/>
    </location>
</feature>
<feature type="region of interest" description="Domain A">
    <location>
        <begin position="373"/>
        <end position="579"/>
    </location>
</feature>
<feature type="region of interest" description="Spacer">
    <location>
        <begin position="580"/>
        <end position="639"/>
    </location>
</feature>
<feature type="region of interest" description="Disordered" evidence="4">
    <location>
        <begin position="610"/>
        <end position="632"/>
    </location>
</feature>
<feature type="region of interest" description="Domain B">
    <location>
        <begin position="640"/>
        <end position="771"/>
    </location>
</feature>
<feature type="region of interest" description="Interaction with LIMD1" evidence="29">
    <location>
        <begin position="763"/>
        <end position="928"/>
    </location>
</feature>
<feature type="region of interest" description="Domain C; mediates interaction with E4F1" evidence="11">
    <location>
        <begin position="771"/>
        <end position="928"/>
    </location>
</feature>
<feature type="region of interest" description="Disordered" evidence="4">
    <location>
        <begin position="860"/>
        <end position="928"/>
    </location>
</feature>
<feature type="short sequence motif" description="Bipartite nuclear localization signal" evidence="2">
    <location>
        <begin position="860"/>
        <end position="876"/>
    </location>
</feature>
<feature type="compositionally biased region" description="Low complexity" evidence="4">
    <location>
        <begin position="8"/>
        <end position="19"/>
    </location>
</feature>
<feature type="compositionally biased region" description="Acidic residues" evidence="4">
    <location>
        <begin position="29"/>
        <end position="39"/>
    </location>
</feature>
<feature type="compositionally biased region" description="Polar residues" evidence="4">
    <location>
        <begin position="619"/>
        <end position="632"/>
    </location>
</feature>
<feature type="compositionally biased region" description="Basic and acidic residues" evidence="4">
    <location>
        <begin position="915"/>
        <end position="928"/>
    </location>
</feature>
<feature type="modified residue" description="N,N-dimethylproline" evidence="2">
    <location>
        <position position="2"/>
    </location>
</feature>
<feature type="modified residue" description="Phosphoserine" evidence="72 73 77">
    <location>
        <position position="37"/>
    </location>
</feature>
<feature type="modified residue" description="Phosphoserine; by CDK1" evidence="39 71 72 73 75 76">
    <location>
        <position position="249"/>
    </location>
</feature>
<feature type="modified residue" description="Phosphothreonine; by CDK1" evidence="39 71 72 76">
    <location>
        <position position="252"/>
    </location>
</feature>
<feature type="modified residue" description="Phosphothreonine" evidence="71 76">
    <location>
        <position position="356"/>
    </location>
</feature>
<feature type="modified residue" description="Phosphothreonine; by CDK1" evidence="39 73 76">
    <location>
        <position position="373"/>
    </location>
</feature>
<feature type="modified residue" description="Phosphoserine; by CDK2" evidence="8">
    <location>
        <position position="567"/>
    </location>
</feature>
<feature type="modified residue" description="Phosphoserine" evidence="2">
    <location>
        <position position="608"/>
    </location>
</feature>
<feature type="modified residue" description="Phosphoserine; by CHEK2 and CHEK1" evidence="38 72">
    <location>
        <position position="612"/>
    </location>
</feature>
<feature type="modified residue" description="Phosphoserine" evidence="76">
    <location>
        <position position="624"/>
    </location>
</feature>
<feature type="modified residue" description="Phosphoserine" evidence="76">
    <location>
        <position position="780"/>
    </location>
</feature>
<feature type="modified residue" description="Phosphoserine" evidence="76">
    <location>
        <position position="788"/>
    </location>
</feature>
<feature type="modified residue" description="Phosphoserine" evidence="76">
    <location>
        <position position="795"/>
    </location>
</feature>
<feature type="modified residue" description="Phosphoserine; by CDK1 and CDK3" evidence="26 39 72 73 76">
    <location>
        <position position="807"/>
    </location>
</feature>
<feature type="modified residue" description="N6-methyllysine; by SMYD2" evidence="46">
    <location>
        <position position="810"/>
    </location>
</feature>
<feature type="modified residue" description="Phosphoserine; by CDK1 and CDK3" evidence="26 39 72 76">
    <location>
        <position position="811"/>
    </location>
</feature>
<feature type="modified residue" description="Phosphothreonine; by CDK6" evidence="31 36 74 76">
    <location>
        <position position="821"/>
    </location>
</feature>
<feature type="modified residue" description="Phosphothreonine" evidence="72 76">
    <location>
        <position position="823"/>
    </location>
</feature>
<feature type="modified residue" description="Phosphothreonine; by CDK4" evidence="31 36 72 74 76">
    <location>
        <position position="826"/>
    </location>
</feature>
<feature type="modified residue" description="Phosphothreonine" evidence="73">
    <location>
        <position position="841"/>
    </location>
</feature>
<feature type="modified residue" description="Phosphoserine" evidence="76">
    <location>
        <position position="855"/>
    </location>
</feature>
<feature type="modified residue" description="N6-methyllysine; by SMYD2" evidence="43">
    <location>
        <position position="860"/>
    </location>
</feature>
<feature type="modified residue" description="N6-acetyllysine; by PCAF" evidence="44">
    <location>
        <position position="873"/>
    </location>
</feature>
<feature type="modified residue" description="N6-acetyllysine; by PCAF" evidence="44">
    <location>
        <position position="874"/>
    </location>
</feature>
<feature type="sequence variant" id="VAR_005572" description="In RB; dbSNP:rs369833913." evidence="61">
    <original>E</original>
    <variation>Q</variation>
    <location>
        <position position="72"/>
    </location>
</feature>
<feature type="sequence variant" id="VAR_051909" description="In dbSNP:rs3092900.">
    <original>N</original>
    <variation>H</variation>
    <location>
        <position position="133"/>
    </location>
</feature>
<feature type="sequence variant" id="VAR_005573" description="In RB; unilateral form; dbSNP:rs3092902." evidence="65">
    <original>E</original>
    <variation>D</variation>
    <location>
        <position position="137"/>
    </location>
</feature>
<feature type="sequence variant" id="VAR_069376" evidence="47">
    <original>Y</original>
    <variation>H</variation>
    <location>
        <position position="173"/>
    </location>
</feature>
<feature type="sequence variant" id="VAR_005574" description="In RB." evidence="53">
    <original>I</original>
    <variation>T</variation>
    <location>
        <position position="185"/>
    </location>
</feature>
<feature type="sequence variant" id="VAR_010045" description="In RB; uncertain significance; dbSNP:rs200844292." evidence="67">
    <original>G</original>
    <variation>E</variation>
    <location>
        <position position="310"/>
    </location>
</feature>
<feature type="sequence variant" id="VAR_010046" description="In RB; dbSNP:rs121913301." evidence="62">
    <original>R</original>
    <variation>G</variation>
    <location>
        <position position="358"/>
    </location>
</feature>
<feature type="sequence variant" id="VAR_005575" description="In RB; dbSNP:rs767011440.">
    <original>R</original>
    <variation>Q</variation>
    <location>
        <position position="358"/>
    </location>
</feature>
<feature type="sequence variant" id="VAR_019379" description="In dbSNP:rs4151534." evidence="68">
    <original>Q</original>
    <variation>K</variation>
    <location>
        <position position="436"/>
    </location>
</feature>
<feature type="sequence variant" id="VAR_010048" description="In RB." evidence="64">
    <original>K</original>
    <variation>Q</variation>
    <location>
        <position position="447"/>
    </location>
</feature>
<feature type="sequence variant" id="VAR_005576" description="In RB." evidence="59">
    <original>M</original>
    <variation>R</variation>
    <location>
        <position position="457"/>
    </location>
</feature>
<feature type="sequence variant" id="VAR_005577" description="In RB; mild form." evidence="54">
    <location>
        <position position="480"/>
    </location>
</feature>
<feature type="sequence variant" id="VAR_011580" description="In RB." evidence="15">
    <original>R</original>
    <variation>G</variation>
    <location>
        <position position="500"/>
    </location>
</feature>
<feature type="sequence variant" id="VAR_019380" description="In dbSNP:rs4151539." evidence="68">
    <original>A</original>
    <variation>G</variation>
    <location>
        <position position="525"/>
    </location>
</feature>
<feature type="sequence variant" id="VAR_010049" description="In RB; dbSNP:rs1948534047." evidence="52">
    <original>K</original>
    <variation>R</variation>
    <location>
        <position position="530"/>
    </location>
</feature>
<feature type="sequence variant" id="VAR_005578" description="In RB; dbSNP:rs1050717570." evidence="61">
    <original>H</original>
    <variation>Y</variation>
    <location>
        <position position="549"/>
    </location>
</feature>
<feature type="sequence variant" id="VAR_005579" description="In RB; dbSNP:rs137853292." evidence="9 48">
    <original>S</original>
    <variation>L</variation>
    <location>
        <position position="567"/>
    </location>
</feature>
<feature type="sequence variant" id="VAR_051910" description="In dbSNP:rs3092895.">
    <original>L</original>
    <variation>F</variation>
    <location>
        <position position="569"/>
    </location>
</feature>
<feature type="sequence variant" id="VAR_011581" description="In RB." evidence="15">
    <original>K</original>
    <variation>E</variation>
    <location>
        <position position="616"/>
    </location>
</feature>
<feature type="sequence variant" id="VAR_005580" description="In RB; dbSNP:rs1949359622." evidence="53">
    <original>A</original>
    <variation>P</variation>
    <location>
        <position position="635"/>
    </location>
</feature>
<feature type="sequence variant" id="VAR_005581" description="In RB; dbSNP:rs769113950." evidence="53">
    <original>V</original>
    <variation>E</variation>
    <location>
        <position position="654"/>
    </location>
</feature>
<feature type="sequence variant" id="VAR_010050" description="In RB." evidence="62">
    <original>L</original>
    <variation>P</variation>
    <location>
        <position position="657"/>
    </location>
</feature>
<feature type="sequence variant" id="VAR_005582" description="In RB; mild form; dbSNP:rs137853294." evidence="25 54 62 65">
    <original>R</original>
    <variation>W</variation>
    <location>
        <position position="661"/>
    </location>
</feature>
<feature type="sequence variant" id="VAR_005583" description="In RB." evidence="9">
    <original>L</original>
    <variation>P</variation>
    <location>
        <position position="662"/>
    </location>
</feature>
<feature type="sequence variant" id="VAR_005584" description="In RB; dbSNP:rs2138336107.">
    <original>H</original>
    <variation>P</variation>
    <location>
        <position position="673"/>
    </location>
</feature>
<feature type="sequence variant" id="VAR_005585" description="In RB." evidence="53">
    <original>Q</original>
    <variation>P</variation>
    <location>
        <position position="685"/>
    </location>
</feature>
<feature type="sequence variant" id="VAR_051911" description="In dbSNP:rs3092903.">
    <original>D</original>
    <variation>E</variation>
    <location>
        <position position="697"/>
    </location>
</feature>
<feature type="sequence variant" id="VAR_005586" description="In RB; dbSNP:rs121913295." evidence="57">
    <original>C</original>
    <variation>Y</variation>
    <location>
        <position position="706"/>
    </location>
</feature>
<feature type="sequence variant" id="VAR_005587" description="In RB; dbSNP:rs137853296." evidence="9">
    <original>C</original>
    <variation>R</variation>
    <location>
        <position position="712"/>
    </location>
</feature>
<feature type="sequence variant" id="VAR_034442" description="In dbSNP:rs3092905.">
    <original>E</original>
    <variation>G</variation>
    <location>
        <position position="746"/>
    </location>
</feature>
<feature type="sequence variant" id="VAR_005588" description="In RB; dbSNP:rs1379479714." evidence="61">
    <original>N</original>
    <variation>K</variation>
    <location>
        <position position="803"/>
    </location>
</feature>
<feature type="mutagenesis site" description="Abolishes interaction with Pocket domain; when associated with A-826." evidence="36">
    <original>T</original>
    <variation>A</variation>
    <location>
        <position position="821"/>
    </location>
</feature>
<feature type="mutagenesis site" description="Abolishes interaction with Pocket domain; when associated with A-821." evidence="36">
    <original>T</original>
    <variation>A</variation>
    <location>
        <position position="826"/>
    </location>
</feature>
<feature type="mutagenesis site" description="Abolishes monomethylation by SMYD2 and subsequent interaction with L3MBTL1." evidence="43">
    <original>K</original>
    <variation>R</variation>
    <location>
        <position position="860"/>
    </location>
</feature>
<feature type="mutagenesis site" description="Does not affect the ability to be methylated by SMYD2; when associated with 873-R-R-874." evidence="43">
    <original>K</original>
    <variation>R</variation>
    <location>
        <position position="870"/>
    </location>
</feature>
<feature type="mutagenesis site" description="Does not affect the ability to be methylated by SMYD2; when associated with 873-R-R-874." evidence="43 44">
    <original>KK</original>
    <variation>R</variation>
    <location>
        <begin position="873"/>
        <end position="874"/>
    </location>
</feature>
<feature type="mutagenesis site" description="Does not alter Rb localization in cycling cells, but mislocalizes to the cytoplasm during keratinocyte differentiation. Does not affect the ability to arrest cell growth. Probable loss of acetylation by PCAF." evidence="43 44">
    <original>KK</original>
    <variation>RR</variation>
    <location>
        <begin position="873"/>
        <end position="874"/>
    </location>
</feature>
<feature type="sequence conflict" description="In Ref. 7; AAN64133." evidence="70" ref="7">
    <original>RS</original>
    <variation>SN</variation>
    <location>
        <begin position="500"/>
        <end position="501"/>
    </location>
</feature>
<feature type="helix" evidence="80">
    <location>
        <begin position="55"/>
        <end position="63"/>
    </location>
</feature>
<feature type="helix" evidence="80">
    <location>
        <begin position="68"/>
        <end position="82"/>
    </location>
</feature>
<feature type="helix" evidence="80">
    <location>
        <begin position="95"/>
        <end position="110"/>
    </location>
</feature>
<feature type="helix" evidence="80">
    <location>
        <begin position="117"/>
        <end position="124"/>
    </location>
</feature>
<feature type="helix" evidence="80">
    <location>
        <begin position="128"/>
        <end position="135"/>
    </location>
</feature>
<feature type="helix" evidence="80">
    <location>
        <begin position="142"/>
        <end position="172"/>
    </location>
</feature>
<feature type="strand" evidence="80">
    <location>
        <begin position="180"/>
        <end position="182"/>
    </location>
</feature>
<feature type="helix" evidence="80">
    <location>
        <begin position="188"/>
        <end position="204"/>
    </location>
</feature>
<feature type="strand" evidence="82">
    <location>
        <begin position="207"/>
        <end position="209"/>
    </location>
</feature>
<feature type="helix" evidence="80">
    <location>
        <begin position="212"/>
        <end position="228"/>
    </location>
</feature>
<feature type="helix" evidence="80">
    <location>
        <begin position="232"/>
        <end position="234"/>
    </location>
</feature>
<feature type="turn" evidence="80">
    <location>
        <begin position="237"/>
        <end position="240"/>
    </location>
</feature>
<feature type="helix" evidence="80">
    <location>
        <begin position="241"/>
        <end position="243"/>
    </location>
</feature>
<feature type="helix" evidence="80">
    <location>
        <begin position="272"/>
        <end position="281"/>
    </location>
</feature>
<feature type="helix" evidence="80">
    <location>
        <begin position="285"/>
        <end position="294"/>
    </location>
</feature>
<feature type="helix" evidence="80">
    <location>
        <begin position="296"/>
        <end position="299"/>
    </location>
</feature>
<feature type="helix" evidence="82">
    <location>
        <begin position="302"/>
        <end position="306"/>
    </location>
</feature>
<feature type="helix" evidence="80">
    <location>
        <begin position="314"/>
        <end position="328"/>
    </location>
</feature>
<feature type="helix" evidence="80">
    <location>
        <begin position="333"/>
        <end position="338"/>
    </location>
</feature>
<feature type="helix" evidence="80">
    <location>
        <begin position="341"/>
        <end position="343"/>
    </location>
</feature>
<feature type="helix" evidence="80">
    <location>
        <begin position="347"/>
        <end position="353"/>
    </location>
</feature>
<feature type="helix" evidence="81">
    <location>
        <begin position="382"/>
        <end position="391"/>
    </location>
</feature>
<feature type="helix" evidence="81">
    <location>
        <begin position="398"/>
        <end position="405"/>
    </location>
</feature>
<feature type="strand" evidence="81">
    <location>
        <begin position="407"/>
        <end position="409"/>
    </location>
</feature>
<feature type="helix" evidence="81">
    <location>
        <begin position="412"/>
        <end position="434"/>
    </location>
</feature>
<feature type="helix" evidence="81">
    <location>
        <begin position="436"/>
        <end position="438"/>
    </location>
</feature>
<feature type="helix" evidence="81">
    <location>
        <begin position="439"/>
        <end position="468"/>
    </location>
</feature>
<feature type="helix" evidence="81">
    <location>
        <begin position="474"/>
        <end position="477"/>
    </location>
</feature>
<feature type="helix" evidence="81">
    <location>
        <begin position="480"/>
        <end position="501"/>
    </location>
</feature>
<feature type="turn" evidence="78">
    <location>
        <begin position="504"/>
        <end position="506"/>
    </location>
</feature>
<feature type="strand" evidence="82">
    <location>
        <begin position="511"/>
        <end position="513"/>
    </location>
</feature>
<feature type="helix" evidence="81">
    <location>
        <begin position="516"/>
        <end position="521"/>
    </location>
</feature>
<feature type="helix" evidence="81">
    <location>
        <begin position="525"/>
        <end position="529"/>
    </location>
</feature>
<feature type="helix" evidence="81">
    <location>
        <begin position="532"/>
        <end position="538"/>
    </location>
</feature>
<feature type="helix" evidence="81">
    <location>
        <begin position="544"/>
        <end position="559"/>
    </location>
</feature>
<feature type="helix" evidence="81">
    <location>
        <begin position="561"/>
        <end position="563"/>
    </location>
</feature>
<feature type="strand" evidence="82">
    <location>
        <begin position="564"/>
        <end position="566"/>
    </location>
</feature>
<feature type="helix" evidence="81">
    <location>
        <begin position="569"/>
        <end position="577"/>
    </location>
</feature>
<feature type="helix" evidence="83">
    <location>
        <begin position="582"/>
        <end position="586"/>
    </location>
</feature>
<feature type="helix" evidence="83">
    <location>
        <begin position="602"/>
        <end position="607"/>
    </location>
</feature>
<feature type="helix" evidence="81">
    <location>
        <begin position="645"/>
        <end position="669"/>
    </location>
</feature>
<feature type="helix" evidence="81">
    <location>
        <begin position="676"/>
        <end position="690"/>
    </location>
</feature>
<feature type="helix" evidence="81">
    <location>
        <begin position="692"/>
        <end position="695"/>
    </location>
</feature>
<feature type="helix" evidence="81">
    <location>
        <begin position="700"/>
        <end position="714"/>
    </location>
</feature>
<feature type="helix" evidence="81">
    <location>
        <begin position="721"/>
        <end position="728"/>
    </location>
</feature>
<feature type="strand" evidence="78">
    <location>
        <begin position="731"/>
        <end position="733"/>
    </location>
</feature>
<feature type="helix" evidence="81">
    <location>
        <begin position="737"/>
        <end position="740"/>
    </location>
</feature>
<feature type="strand" evidence="81">
    <location>
        <begin position="741"/>
        <end position="743"/>
    </location>
</feature>
<feature type="strand" evidence="81">
    <location>
        <begin position="745"/>
        <end position="747"/>
    </location>
</feature>
<feature type="strand" evidence="82">
    <location>
        <begin position="748"/>
        <end position="750"/>
    </location>
</feature>
<feature type="helix" evidence="81">
    <location>
        <begin position="752"/>
        <end position="758"/>
    </location>
</feature>
<feature type="helix" evidence="81">
    <location>
        <begin position="760"/>
        <end position="770"/>
    </location>
</feature>
<feature type="strand" evidence="81">
    <location>
        <begin position="773"/>
        <end position="775"/>
    </location>
</feature>
<feature type="strand" evidence="79">
    <location>
        <begin position="830"/>
        <end position="836"/>
    </location>
</feature>
<feature type="turn" evidence="79">
    <location>
        <begin position="838"/>
        <end position="840"/>
    </location>
</feature>
<feature type="helix" evidence="79">
    <location>
        <begin position="841"/>
        <end position="853"/>
    </location>
</feature>
<accession>P06400</accession>
<accession>A8K5E3</accession>
<accession>P78499</accession>
<accession>Q5VW46</accession>
<accession>Q8IZL4</accession>
<reference key="1">
    <citation type="journal article" date="1987" name="Nature">
        <title>The retinoblastoma susceptibility gene encodes a nuclear phosphoprotein associated with DNA binding activity.</title>
        <authorList>
            <person name="Lee W.-H."/>
            <person name="Shew J.-Y."/>
            <person name="Hong F.D."/>
            <person name="Sery T.W."/>
            <person name="Donoso L.A."/>
            <person name="Young L.-J.S."/>
            <person name="Bookstein R."/>
            <person name="Lee E.Y.-H.P."/>
        </authorList>
    </citation>
    <scope>NUCLEOTIDE SEQUENCE [MRNA]</scope>
</reference>
<reference key="2">
    <citation type="journal article" date="1987" name="Science">
        <title>Human retinoblastoma susceptibility gene: cloning, identification, and sequence.</title>
        <authorList>
            <person name="Lee W.-H."/>
            <person name="Bookstein R."/>
            <person name="Hong F.D."/>
            <person name="Young L.-J."/>
            <person name="Shew J.-Y."/>
            <person name="Lee E.Y.-H.P."/>
        </authorList>
    </citation>
    <scope>SEQUENCE REVISION</scope>
</reference>
<reference key="3">
    <citation type="journal article" date="1987" name="Proc. Natl. Acad. Sci. U.S.A.">
        <title>Deletions of a DNA sequence in retinoblastomas and mesenchymal tumors: organization of the sequence and its encoded protein.</title>
        <authorList>
            <person name="Friend S.H."/>
            <person name="Horowitz J.M."/>
            <person name="Gerber M.R."/>
            <person name="Wang X.-F."/>
            <person name="Bogenmann E."/>
            <person name="Li F.P."/>
            <person name="Weinberg R.A."/>
        </authorList>
    </citation>
    <scope>NUCLEOTIDE SEQUENCE [MRNA]</scope>
</reference>
<reference key="4">
    <citation type="journal article" date="1989" name="Gene">
        <title>Structure and partial genomic sequence of the human retinoblastoma susceptibility gene.</title>
        <authorList>
            <person name="McGee T.L."/>
            <person name="Yandell D.W."/>
            <person name="Dryja T.P."/>
        </authorList>
    </citation>
    <scope>NUCLEOTIDE SEQUENCE [GENOMIC DNA]</scope>
</reference>
<reference key="5">
    <citation type="journal article" date="1992" name="Oncogene">
        <title>Detection of heterozygous mutations in the RB1 gene in retinoblastoma patients using single-strand conformation polymorphism analysis and polymerase chain reaction sequencing.</title>
        <authorList>
            <person name="Hogg A."/>
            <person name="Onadim Z."/>
            <person name="Baird P.N."/>
            <person name="Cowell J.K."/>
        </authorList>
    </citation>
    <scope>NUCLEOTIDE SEQUENCE [GENOMIC DNA]</scope>
    <source>
        <tissue>Carcinoma</tissue>
    </source>
</reference>
<reference key="6">
    <citation type="journal article" date="1993" name="Genomics">
        <title>Complete genomic sequence of the human retinoblastoma susceptibility gene.</title>
        <authorList>
            <person name="Toguchida J."/>
            <person name="McGee T.L."/>
            <person name="Paterson J.C."/>
            <person name="Eagle J.R."/>
            <person name="Tucker S."/>
            <person name="Yandell D.W."/>
            <person name="Dryja T.P."/>
        </authorList>
    </citation>
    <scope>NUCLEOTIDE SEQUENCE [GENOMIC DNA]</scope>
</reference>
<reference key="7">
    <citation type="submission" date="2002-10" db="EMBL/GenBank/DDBJ databases">
        <authorList>
            <consortium name="NIEHS SNPs program"/>
        </authorList>
    </citation>
    <scope>NUCLEOTIDE SEQUENCE [GENOMIC DNA]</scope>
    <scope>VARIANTS LYS-436 AND GLY-525</scope>
</reference>
<reference key="8">
    <citation type="journal article" date="2004" name="Nat. Genet.">
        <title>Complete sequencing and characterization of 21,243 full-length human cDNAs.</title>
        <authorList>
            <person name="Ota T."/>
            <person name="Suzuki Y."/>
            <person name="Nishikawa T."/>
            <person name="Otsuki T."/>
            <person name="Sugiyama T."/>
            <person name="Irie R."/>
            <person name="Wakamatsu A."/>
            <person name="Hayashi K."/>
            <person name="Sato H."/>
            <person name="Nagai K."/>
            <person name="Kimura K."/>
            <person name="Makita H."/>
            <person name="Sekine M."/>
            <person name="Obayashi M."/>
            <person name="Nishi T."/>
            <person name="Shibahara T."/>
            <person name="Tanaka T."/>
            <person name="Ishii S."/>
            <person name="Yamamoto J."/>
            <person name="Saito K."/>
            <person name="Kawai Y."/>
            <person name="Isono Y."/>
            <person name="Nakamura Y."/>
            <person name="Nagahari K."/>
            <person name="Murakami K."/>
            <person name="Yasuda T."/>
            <person name="Iwayanagi T."/>
            <person name="Wagatsuma M."/>
            <person name="Shiratori A."/>
            <person name="Sudo H."/>
            <person name="Hosoiri T."/>
            <person name="Kaku Y."/>
            <person name="Kodaira H."/>
            <person name="Kondo H."/>
            <person name="Sugawara M."/>
            <person name="Takahashi M."/>
            <person name="Kanda K."/>
            <person name="Yokoi T."/>
            <person name="Furuya T."/>
            <person name="Kikkawa E."/>
            <person name="Omura Y."/>
            <person name="Abe K."/>
            <person name="Kamihara K."/>
            <person name="Katsuta N."/>
            <person name="Sato K."/>
            <person name="Tanikawa M."/>
            <person name="Yamazaki M."/>
            <person name="Ninomiya K."/>
            <person name="Ishibashi T."/>
            <person name="Yamashita H."/>
            <person name="Murakawa K."/>
            <person name="Fujimori K."/>
            <person name="Tanai H."/>
            <person name="Kimata M."/>
            <person name="Watanabe M."/>
            <person name="Hiraoka S."/>
            <person name="Chiba Y."/>
            <person name="Ishida S."/>
            <person name="Ono Y."/>
            <person name="Takiguchi S."/>
            <person name="Watanabe S."/>
            <person name="Yosida M."/>
            <person name="Hotuta T."/>
            <person name="Kusano J."/>
            <person name="Kanehori K."/>
            <person name="Takahashi-Fujii A."/>
            <person name="Hara H."/>
            <person name="Tanase T.-O."/>
            <person name="Nomura Y."/>
            <person name="Togiya S."/>
            <person name="Komai F."/>
            <person name="Hara R."/>
            <person name="Takeuchi K."/>
            <person name="Arita M."/>
            <person name="Imose N."/>
            <person name="Musashino K."/>
            <person name="Yuuki H."/>
            <person name="Oshima A."/>
            <person name="Sasaki N."/>
            <person name="Aotsuka S."/>
            <person name="Yoshikawa Y."/>
            <person name="Matsunawa H."/>
            <person name="Ichihara T."/>
            <person name="Shiohata N."/>
            <person name="Sano S."/>
            <person name="Moriya S."/>
            <person name="Momiyama H."/>
            <person name="Satoh N."/>
            <person name="Takami S."/>
            <person name="Terashima Y."/>
            <person name="Suzuki O."/>
            <person name="Nakagawa S."/>
            <person name="Senoh A."/>
            <person name="Mizoguchi H."/>
            <person name="Goto Y."/>
            <person name="Shimizu F."/>
            <person name="Wakebe H."/>
            <person name="Hishigaki H."/>
            <person name="Watanabe T."/>
            <person name="Sugiyama A."/>
            <person name="Takemoto M."/>
            <person name="Kawakami B."/>
            <person name="Yamazaki M."/>
            <person name="Watanabe K."/>
            <person name="Kumagai A."/>
            <person name="Itakura S."/>
            <person name="Fukuzumi Y."/>
            <person name="Fujimori Y."/>
            <person name="Komiyama M."/>
            <person name="Tashiro H."/>
            <person name="Tanigami A."/>
            <person name="Fujiwara T."/>
            <person name="Ono T."/>
            <person name="Yamada K."/>
            <person name="Fujii Y."/>
            <person name="Ozaki K."/>
            <person name="Hirao M."/>
            <person name="Ohmori Y."/>
            <person name="Kawabata A."/>
            <person name="Hikiji T."/>
            <person name="Kobatake N."/>
            <person name="Inagaki H."/>
            <person name="Ikema Y."/>
            <person name="Okamoto S."/>
            <person name="Okitani R."/>
            <person name="Kawakami T."/>
            <person name="Noguchi S."/>
            <person name="Itoh T."/>
            <person name="Shigeta K."/>
            <person name="Senba T."/>
            <person name="Matsumura K."/>
            <person name="Nakajima Y."/>
            <person name="Mizuno T."/>
            <person name="Morinaga M."/>
            <person name="Sasaki M."/>
            <person name="Togashi T."/>
            <person name="Oyama M."/>
            <person name="Hata H."/>
            <person name="Watanabe M."/>
            <person name="Komatsu T."/>
            <person name="Mizushima-Sugano J."/>
            <person name="Satoh T."/>
            <person name="Shirai Y."/>
            <person name="Takahashi Y."/>
            <person name="Nakagawa K."/>
            <person name="Okumura K."/>
            <person name="Nagase T."/>
            <person name="Nomura N."/>
            <person name="Kikuchi H."/>
            <person name="Masuho Y."/>
            <person name="Yamashita R."/>
            <person name="Nakai K."/>
            <person name="Yada T."/>
            <person name="Nakamura Y."/>
            <person name="Ohara O."/>
            <person name="Isogai T."/>
            <person name="Sugano S."/>
        </authorList>
    </citation>
    <scope>NUCLEOTIDE SEQUENCE [LARGE SCALE MRNA]</scope>
</reference>
<reference key="9">
    <citation type="journal article" date="2004" name="Nature">
        <title>The DNA sequence and analysis of human chromosome 13.</title>
        <authorList>
            <person name="Dunham A."/>
            <person name="Matthews L.H."/>
            <person name="Burton J."/>
            <person name="Ashurst J.L."/>
            <person name="Howe K.L."/>
            <person name="Ashcroft K.J."/>
            <person name="Beare D.M."/>
            <person name="Burford D.C."/>
            <person name="Hunt S.E."/>
            <person name="Griffiths-Jones S."/>
            <person name="Jones M.C."/>
            <person name="Keenan S.J."/>
            <person name="Oliver K."/>
            <person name="Scott C.E."/>
            <person name="Ainscough R."/>
            <person name="Almeida J.P."/>
            <person name="Ambrose K.D."/>
            <person name="Andrews D.T."/>
            <person name="Ashwell R.I.S."/>
            <person name="Babbage A.K."/>
            <person name="Bagguley C.L."/>
            <person name="Bailey J."/>
            <person name="Bannerjee R."/>
            <person name="Barlow K.F."/>
            <person name="Bates K."/>
            <person name="Beasley H."/>
            <person name="Bird C.P."/>
            <person name="Bray-Allen S."/>
            <person name="Brown A.J."/>
            <person name="Brown J.Y."/>
            <person name="Burrill W."/>
            <person name="Carder C."/>
            <person name="Carter N.P."/>
            <person name="Chapman J.C."/>
            <person name="Clamp M.E."/>
            <person name="Clark S.Y."/>
            <person name="Clarke G."/>
            <person name="Clee C.M."/>
            <person name="Clegg S.C."/>
            <person name="Cobley V."/>
            <person name="Collins J.E."/>
            <person name="Corby N."/>
            <person name="Coville G.J."/>
            <person name="Deloukas P."/>
            <person name="Dhami P."/>
            <person name="Dunham I."/>
            <person name="Dunn M."/>
            <person name="Earthrowl M.E."/>
            <person name="Ellington A.G."/>
            <person name="Faulkner L."/>
            <person name="Frankish A.G."/>
            <person name="Frankland J."/>
            <person name="French L."/>
            <person name="Garner P."/>
            <person name="Garnett J."/>
            <person name="Gilbert J.G.R."/>
            <person name="Gilson C.J."/>
            <person name="Ghori J."/>
            <person name="Grafham D.V."/>
            <person name="Gribble S.M."/>
            <person name="Griffiths C."/>
            <person name="Hall R.E."/>
            <person name="Hammond S."/>
            <person name="Harley J.L."/>
            <person name="Hart E.A."/>
            <person name="Heath P.D."/>
            <person name="Howden P.J."/>
            <person name="Huckle E.J."/>
            <person name="Hunt P.J."/>
            <person name="Hunt A.R."/>
            <person name="Johnson C."/>
            <person name="Johnson D."/>
            <person name="Kay M."/>
            <person name="Kimberley A.M."/>
            <person name="King A."/>
            <person name="Laird G.K."/>
            <person name="Langford C.J."/>
            <person name="Lawlor S."/>
            <person name="Leongamornlert D.A."/>
            <person name="Lloyd D.M."/>
            <person name="Lloyd C."/>
            <person name="Loveland J.E."/>
            <person name="Lovell J."/>
            <person name="Martin S."/>
            <person name="Mashreghi-Mohammadi M."/>
            <person name="McLaren S.J."/>
            <person name="McMurray A."/>
            <person name="Milne S."/>
            <person name="Moore M.J.F."/>
            <person name="Nickerson T."/>
            <person name="Palmer S.A."/>
            <person name="Pearce A.V."/>
            <person name="Peck A.I."/>
            <person name="Pelan S."/>
            <person name="Phillimore B."/>
            <person name="Porter K.M."/>
            <person name="Rice C.M."/>
            <person name="Searle S."/>
            <person name="Sehra H.K."/>
            <person name="Shownkeen R."/>
            <person name="Skuce C.D."/>
            <person name="Smith M."/>
            <person name="Steward C.A."/>
            <person name="Sycamore N."/>
            <person name="Tester J."/>
            <person name="Thomas D.W."/>
            <person name="Tracey A."/>
            <person name="Tromans A."/>
            <person name="Tubby B."/>
            <person name="Wall M."/>
            <person name="Wallis J.M."/>
            <person name="West A.P."/>
            <person name="Whitehead S.L."/>
            <person name="Willey D.L."/>
            <person name="Wilming L."/>
            <person name="Wray P.W."/>
            <person name="Wright M.W."/>
            <person name="Young L."/>
            <person name="Coulson A."/>
            <person name="Durbin R.M."/>
            <person name="Hubbard T."/>
            <person name="Sulston J.E."/>
            <person name="Beck S."/>
            <person name="Bentley D.R."/>
            <person name="Rogers J."/>
            <person name="Ross M.T."/>
        </authorList>
    </citation>
    <scope>NUCLEOTIDE SEQUENCE [LARGE SCALE GENOMIC DNA]</scope>
</reference>
<reference key="10">
    <citation type="submission" date="2005-07" db="EMBL/GenBank/DDBJ databases">
        <authorList>
            <person name="Mural R.J."/>
            <person name="Istrail S."/>
            <person name="Sutton G.G."/>
            <person name="Florea L."/>
            <person name="Halpern A.L."/>
            <person name="Mobarry C.M."/>
            <person name="Lippert R."/>
            <person name="Walenz B."/>
            <person name="Shatkay H."/>
            <person name="Dew I."/>
            <person name="Miller J.R."/>
            <person name="Flanigan M.J."/>
            <person name="Edwards N.J."/>
            <person name="Bolanos R."/>
            <person name="Fasulo D."/>
            <person name="Halldorsson B.V."/>
            <person name="Hannenhalli S."/>
            <person name="Turner R."/>
            <person name="Yooseph S."/>
            <person name="Lu F."/>
            <person name="Nusskern D.R."/>
            <person name="Shue B.C."/>
            <person name="Zheng X.H."/>
            <person name="Zhong F."/>
            <person name="Delcher A.L."/>
            <person name="Huson D.H."/>
            <person name="Kravitz S.A."/>
            <person name="Mouchard L."/>
            <person name="Reinert K."/>
            <person name="Remington K.A."/>
            <person name="Clark A.G."/>
            <person name="Waterman M.S."/>
            <person name="Eichler E.E."/>
            <person name="Adams M.D."/>
            <person name="Hunkapiller M.W."/>
            <person name="Myers E.W."/>
            <person name="Venter J.C."/>
        </authorList>
    </citation>
    <scope>NUCLEOTIDE SEQUENCE [LARGE SCALE GENOMIC DNA]</scope>
</reference>
<reference key="11">
    <citation type="journal article" date="2004" name="Genome Res.">
        <title>The status, quality, and expansion of the NIH full-length cDNA project: the Mammalian Gene Collection (MGC).</title>
        <authorList>
            <consortium name="The MGC Project Team"/>
        </authorList>
    </citation>
    <scope>NUCLEOTIDE SEQUENCE [LARGE SCALE MRNA]</scope>
    <source>
        <tissue>Cervix</tissue>
        <tissue>Testis</tissue>
    </source>
</reference>
<reference key="12">
    <citation type="journal article" date="1989" name="Oncogene">
        <title>Genomic organization of the human retinoblastoma gene.</title>
        <authorList>
            <person name="T'Ang A."/>
            <person name="Wu K.J."/>
            <person name="Hashimoto T."/>
            <person name="Liu W.Y."/>
            <person name="Takahashi R."/>
            <person name="Shi X.H."/>
            <person name="Mihara K."/>
            <person name="Zhang F.H."/>
            <person name="Chen Y.Y."/>
            <person name="Du C."/>
            <person name="Qian J."/>
            <person name="Lin Y.G."/>
            <person name="Murphree A.L."/>
            <person name="Qiu W.R."/>
            <person name="Thompson T."/>
            <person name="Benedict W.F."/>
            <person name="Fung Y.K.T."/>
        </authorList>
    </citation>
    <scope>NUCLEOTIDE SEQUENCE [GENOMIC DNA] OF 1-45</scope>
</reference>
<reference key="13">
    <citation type="journal article" date="1994" name="Hum. Mol. Genet.">
        <title>Spectrum of small length germline mutations in the RB1 gene.</title>
        <authorList>
            <person name="Lohmann D.R."/>
            <person name="Brandt B."/>
            <person name="Hopping W."/>
            <person name="Passarge E."/>
            <person name="Horsthemke B."/>
        </authorList>
    </citation>
    <scope>PROTEIN SEQUENCE OF 47-65</scope>
    <scope>INVOLVEMENT IN RETINOBLASTOMA</scope>
</reference>
<reference key="14">
    <citation type="journal article" date="1992" name="Proc. Natl. Acad. Sci. U.S.A.">
        <title>Adenovirus E1A, simian virus 40 tumor antigen, and human papillomavirus E7 protein share the capacity to disrupt the interaction between transcription factor E2F and the retinoblastoma gene product.</title>
        <authorList>
            <person name="Chellappan S."/>
            <person name="Kraus V.B."/>
            <person name="Kroger B."/>
            <person name="Munger K."/>
            <person name="Howley P.M."/>
            <person name="Phelps W.C."/>
            <person name="Nevins J.R."/>
        </authorList>
    </citation>
    <scope>INTERACTION WITH SV40 LARGE T ANTIGEN AND HPV E7 PROTEIN (MICROBIAL INFECTION)</scope>
</reference>
<reference key="15">
    <citation type="journal article" date="1993" name="Mol. Cell. Biol.">
        <title>A bipartite nuclear localization signal in the retinoblastoma gene product and its importance for biological activity.</title>
        <authorList>
            <person name="Zacksenhaus E."/>
            <person name="Bremner R."/>
            <person name="Phillips R.A."/>
            <person name="Gallie B.L."/>
        </authorList>
    </citation>
    <scope>INTERACTION WITH E2F1</scope>
</reference>
<reference key="16">
    <citation type="journal article" date="1994" name="Mol. Cell. Biol.">
        <title>Identification of G1 kinase activity for cdk6, a novel cyclin D partner.</title>
        <authorList>
            <person name="Meyerson M."/>
            <person name="Harlow E."/>
        </authorList>
    </citation>
    <scope>PHOSPHORYLATION BY CDK6</scope>
</reference>
<reference key="17">
    <citation type="journal article" date="1988" name="Cell">
        <title>SV40 large tumor antigen forms a specific complex with the product of the retinoblastoma susceptibility gene.</title>
        <authorList>
            <person name="Decaprio J.A."/>
            <person name="Ludlow J.W."/>
            <person name="Figge J."/>
            <person name="Shew J.-Y."/>
            <person name="Huang C.-M."/>
            <person name="Lee W.-H."/>
            <person name="Marsilio E."/>
            <person name="Paucha E."/>
            <person name="Livingston D.M."/>
        </authorList>
    </citation>
    <scope>INTERACTION WITH SV40 LARGE T ANTIGEN (MICROBIAL INFECTION)</scope>
</reference>
<reference key="18">
    <citation type="journal article" date="1988" name="Proc. Natl. Acad. Sci. U.S.A.">
        <title>Molecular mechanism of retinoblastoma gene inactivation in retinoblastoma cell line Y79.</title>
        <authorList>
            <person name="Lee E.Y.-H.P."/>
            <person name="Bookstein R."/>
            <person name="Young L.-J."/>
            <person name="Lin C.-J."/>
            <person name="Rosenfeld M.G."/>
            <person name="Lee W.-H."/>
        </authorList>
    </citation>
    <scope>INVOLVEMENT IN RETINOBLASTOMA</scope>
</reference>
<reference key="19">
    <citation type="journal article" date="1991" name="EMBO J.">
        <title>The retinoblastoma protein is phosphorylated on multiple sites by human cdc2.</title>
        <authorList>
            <person name="Lees J.A."/>
            <person name="Buchkovich K.J."/>
            <person name="Marshak D.R."/>
            <person name="Anderson C.W."/>
            <person name="Harlow E."/>
        </authorList>
    </citation>
    <scope>PHOSPHORYLATION AT SER-249; THR-252; THR-373; SER-807 AND SER-811</scope>
</reference>
<reference key="20">
    <citation type="journal article" date="1993" name="Oncogene">
        <title>Characterization of the retinoblastoma binding proteins RBP1 and RBP2.</title>
        <authorList>
            <person name="Fattaey A.R."/>
            <person name="Helin K."/>
            <person name="Dembski M.S."/>
            <person name="Dyson N."/>
            <person name="Harlow E."/>
            <person name="Vuocolo G.A."/>
            <person name="Hanobik M.G."/>
            <person name="Haskell K.M."/>
            <person name="Oliff A."/>
            <person name="Defeo-Jones D."/>
            <person name="Jones R.E."/>
        </authorList>
    </citation>
    <scope>INTERACTION WITH KDM5A AND ARID4A</scope>
</reference>
<reference key="21">
    <citation type="journal article" date="1994" name="J. Cell Biol.">
        <title>The amino-terminal region of the retinoblastoma gene product binds a novel nuclear matrix protein that co-localizes to centers for RNA processing.</title>
        <authorList>
            <person name="Durfee T."/>
            <person name="Mancini M.A."/>
            <person name="Jones D."/>
            <person name="Elledge S.J."/>
            <person name="Lee W.H."/>
        </authorList>
    </citation>
    <scope>INTERACTION WITH THOC1</scope>
</reference>
<reference key="22">
    <citation type="journal article" date="1994" name="Mol. Cell. Biol.">
        <title>Differential specificity for binding of retinoblastoma binding protein 2 to RB, p107, and TATA-binding protein.</title>
        <authorList>
            <person name="Kim Y.W."/>
            <person name="Otterson G.A."/>
            <person name="Kratzke R.A."/>
            <person name="Coxon A.B."/>
            <person name="Kaye F.J."/>
        </authorList>
    </citation>
    <scope>INTERACTION WITH KDM5A</scope>
</reference>
<reference key="23">
    <citation type="journal article" date="1996" name="J. Virol.">
        <title>The human cytomegalovirus IE1-72 protein interacts with the cellular p107 protein and relieves p107-mediated transcriptional repression of an E2F-responsive promoter.</title>
        <authorList>
            <person name="Poma E.E."/>
            <person name="Kowalik T.F."/>
            <person name="Zhu L."/>
            <person name="Sinclair J.H."/>
            <person name="Huang E.S."/>
        </authorList>
    </citation>
    <scope>INTERACTION WITH HHV-5 PROTEIN UL123 (MICROBIAL INFECTION)</scope>
</reference>
<reference key="24">
    <citation type="journal article" date="1999" name="Cancer Res.">
        <title>Bdp, a new member of a family of DNA-binding proteins, associates with the retinoblastoma gene product.</title>
        <authorList>
            <person name="Numata S."/>
            <person name="Claudio P.P."/>
            <person name="Dean C."/>
            <person name="Giordano A."/>
            <person name="Croce C.M."/>
        </authorList>
    </citation>
    <scope>INTERACTION WITH ARID3B</scope>
</reference>
<reference key="25">
    <citation type="journal article" date="1999" name="Cell">
        <title>Cdk phosphorylation triggers sequential intramolecular interactions that progressively block Rb functions as cells move through G1.</title>
        <authorList>
            <person name="Harbour J.W."/>
            <person name="Luo R.X."/>
            <person name="Dei Santi A."/>
            <person name="Postigo A.A."/>
            <person name="Dean D.C."/>
        </authorList>
    </citation>
    <scope>FUNCTION</scope>
    <scope>PHOSPHORYLATION AT SER-567 BY CDK2</scope>
    <scope>PHOSPHORYLATION BY CDK4 AND CDK6</scope>
</reference>
<reference key="26">
    <citation type="journal article" date="1999" name="Mol. Cell. Biol.">
        <title>Hec1p, an evolutionarily conserved coiled-coil protein, modulates chromosome segregation through interaction with SMC proteins.</title>
        <authorList>
            <person name="Zheng L."/>
            <person name="Chen Y."/>
            <person name="Lee W.-H."/>
        </authorList>
    </citation>
    <scope>INTERACTION WITH NDC80</scope>
</reference>
<reference key="27">
    <citation type="journal article" date="2000" name="Mol. Cell. Biol.">
        <title>Retinoblastoma protein enhances the fidelity of chromosome segregation mediated by hsHec1p.</title>
        <authorList>
            <person name="Zheng L."/>
            <person name="Chen Y."/>
            <person name="Riley D.J."/>
            <person name="Chen P.-L."/>
            <person name="Lee W.-H."/>
        </authorList>
    </citation>
    <scope>INTERACTION WITH NDC80</scope>
</reference>
<reference key="28">
    <citation type="journal article" date="1999" name="Mol. Cell. Biol.">
        <title>Rb inhibits the intrinsic kinase activity of TATA-binding protein-associated factor TAFII250.</title>
        <authorList>
            <person name="Siegert J.L."/>
            <person name="Robbins P.D."/>
        </authorList>
    </citation>
    <scope>INTERACTION WITH TAF1</scope>
</reference>
<reference key="29">
    <citation type="journal article" date="1999" name="Cancer Res.">
        <title>The partial homeodomain of the transcription factor Pax-5 (BSAP) is an interaction motif for the retinoblastoma and TATA-binding proteins.</title>
        <authorList>
            <person name="Eberhard D."/>
            <person name="Busslinger M."/>
        </authorList>
    </citation>
    <scope>INTERACTION WITH PAX5</scope>
</reference>
<reference key="30">
    <citation type="journal article" date="2000" name="Proc. Natl. Acad. Sci. U.S.A.">
        <title>pRB binds to and modulates the transrepressing activity of the E1A-regulated transcription factor p120E4F.</title>
        <authorList>
            <person name="Fajas L."/>
            <person name="Paul C."/>
            <person name="Zugasti O."/>
            <person name="Le Cam L."/>
            <person name="Polanowska J."/>
            <person name="Fabbrizio E."/>
            <person name="Medema R."/>
            <person name="Vignais M.-L."/>
            <person name="Sardet C."/>
        </authorList>
    </citation>
    <scope>INTERACTION WITH E4F1</scope>
</reference>
<reference key="31">
    <citation type="journal article" date="2001" name="Gene">
        <title>Identification and characterization of a novel human cDNA encoding a 21 kDa pRb-associated protein.</title>
        <authorList>
            <person name="Wen H."/>
            <person name="Ao S."/>
        </authorList>
    </citation>
    <scope>INTERACTION WITH EID1</scope>
</reference>
<reference key="32">
    <citation type="journal article" date="2000" name="Nat. Genet.">
        <title>DNMT1 forms a complex with Rb, E2F1 and HDAC1 and represses transcription from E2F-responsive promoters.</title>
        <authorList>
            <person name="Robertson K.D."/>
            <person name="Ait-Si-Ali S."/>
            <person name="Yokochi T."/>
            <person name="Wade P.A."/>
            <person name="Jones P.L."/>
            <person name="Wolffe A.P."/>
        </authorList>
    </citation>
    <scope>INTERACTION WITH DNMT1</scope>
</reference>
<reference key="33">
    <citation type="journal article" date="2001" name="Nature">
        <title>Rb targets histone H3 methylation and HP1 to promoters.</title>
        <authorList>
            <person name="Nielsen S.J."/>
            <person name="Schneider R."/>
            <person name="Bauer U.-M."/>
            <person name="Bannister A.J."/>
            <person name="Morrison A."/>
            <person name="O'Carroll D."/>
            <person name="Firestein R."/>
            <person name="Cleary M.L."/>
            <person name="Jenuwein T."/>
            <person name="Herrera R.E."/>
            <person name="Kouzarides T."/>
        </authorList>
    </citation>
    <scope>INTERACTION WITH SUV39H1</scope>
</reference>
<reference key="34">
    <citation type="journal article" date="2001" name="Oncogene">
        <title>The de-ubiquitinating enzyme Unp interacts with the retinoblastoma protein.</title>
        <authorList>
            <person name="DeSalle L.M."/>
            <person name="Latres E."/>
            <person name="Lin D."/>
            <person name="Graner E."/>
            <person name="Montagnoli A."/>
            <person name="Baker R.T."/>
            <person name="Pagano M."/>
            <person name="Loda M."/>
        </authorList>
    </citation>
    <scope>INTERACTION WITH USP4</scope>
</reference>
<reference key="35">
    <citation type="journal article" date="2002" name="Cancer Cell">
        <title>Che-1 affects cell growth by interfering with the recruitment of HDAC1 by Rb.</title>
        <authorList>
            <person name="Bruno T."/>
            <person name="De Angelis R."/>
            <person name="De Nicola F."/>
            <person name="Barbato C."/>
            <person name="Di Padova M."/>
            <person name="Corbi N."/>
            <person name="Libri V."/>
            <person name="Benassi B."/>
            <person name="Mattei E."/>
            <person name="Chersi A."/>
            <person name="Soddu S."/>
            <person name="Floridi A."/>
            <person name="Passananti C."/>
            <person name="Fanciulli M."/>
        </authorList>
    </citation>
    <scope>INTERACTION WITH AATF</scope>
</reference>
<reference key="36">
    <citation type="journal article" date="2002" name="Mol. Biol. Cell">
        <title>Lamin A/C binding protein LAP2alpha is required for nuclear anchorage of retinoblastoma protein.</title>
        <authorList>
            <person name="Markiewicz E."/>
            <person name="Dechat T."/>
            <person name="Foisner R."/>
            <person name="Quinlan R.A."/>
            <person name="Hutchison C.J."/>
        </authorList>
    </citation>
    <scope>INTERACTION WITH TMPO-ALPHA AND LMNA</scope>
</reference>
<reference key="37">
    <citation type="journal article" date="2002" name="Nucleic Acids Res.">
        <title>Skip interacts with the retinoblastoma tumor suppressor and inhibits its transcriptional repression activity.</title>
        <authorList>
            <person name="Prathapam T."/>
            <person name="Kuhne C."/>
            <person name="Banks L."/>
        </authorList>
    </citation>
    <scope>INTERACTION WITH SNW1</scope>
</reference>
<reference key="38">
    <citation type="journal article" date="2002" name="Oncogene">
        <title>Physical interaction between pRb and cdk9/cyclinT2 complex.</title>
        <authorList>
            <person name="Simone C."/>
            <person name="Bagella L."/>
            <person name="Bellan C."/>
            <person name="Giordano A."/>
        </authorList>
    </citation>
    <scope>INTERACTION WITH P-TEFB COMPLEX</scope>
</reference>
<reference key="39">
    <citation type="journal article" date="2003" name="J. Biol. Chem.">
        <title>Functional interactions between the estrogen receptor coactivator PELP1/MNAR and retinoblastoma protein.</title>
        <authorList>
            <person name="Balasenthil S."/>
            <person name="Vadlamudi R.K."/>
        </authorList>
    </citation>
    <scope>INTERACTION WITH PELP1</scope>
</reference>
<reference key="40">
    <citation type="journal article" date="2003" name="Proc. Natl. Acad. Sci. U.S.A.">
        <title>Proteasome-dependent, ubiquitin-independent degradation of the Rb family of tumor suppressors by the human cytomegalovirus pp71 protein.</title>
        <authorList>
            <person name="Kalejta R.F."/>
            <person name="Shenk T."/>
        </authorList>
    </citation>
    <scope>INTERACTION WITH HUMAN CYTOMEGALOVIRUS PROTEIN UL82 (MICROBIAL INFECTION)</scope>
</reference>
<reference key="41">
    <citation type="journal article" date="2004" name="Cell">
        <title>Cyclin C/cdk3 promotes Rb-dependent G0 exit.</title>
        <authorList>
            <person name="Ren S."/>
            <person name="Rollins B.J."/>
        </authorList>
    </citation>
    <scope>FUNCTION IN G0-G1 TRANSITION</scope>
    <scope>PHOSPHORYLATION AT SER-807 AND SER-811 BY CDK3</scope>
</reference>
<reference key="42">
    <citation type="journal article" date="2004" name="EMBO J.">
        <title>Inhibition of oncogenic transformation by mammalian Lin-9, a pRB-associated protein.</title>
        <authorList>
            <person name="Gagrica S."/>
            <person name="Hauser S."/>
            <person name="Kolfschoten I."/>
            <person name="Osterloh L."/>
            <person name="Agami R."/>
            <person name="Gaubatz S."/>
        </authorList>
    </citation>
    <scope>INTERACTION WITH LIN9</scope>
</reference>
<reference key="43">
    <citation type="journal article" date="2004" name="Genes Dev.">
        <title>Liver tumors escape negative control of proliferation via PI3K/Akt-mediated block of C/EBP alpha growth inhibitory activity.</title>
        <authorList>
            <person name="Wang G.L."/>
            <person name="Iakova P."/>
            <person name="Wilde M."/>
            <person name="Awad S."/>
            <person name="Timchenko N.A."/>
        </authorList>
    </citation>
    <scope>INTERACTION WITH CEBPA</scope>
</reference>
<reference key="44">
    <citation type="journal article" date="2004" name="Proc. Natl. Acad. Sci. U.S.A.">
        <title>LIM domains-containing protein 1 (LIMD1), a tumor suppressor encoded at chromosome 3p21.3, binds pRB and represses E2F-driven transcription.</title>
        <authorList>
            <person name="Sharp T.V."/>
            <person name="Munoz F."/>
            <person name="Bourboulia D."/>
            <person name="Presneau N."/>
            <person name="Darai E."/>
            <person name="Wang H.-W."/>
            <person name="Cannon M."/>
            <person name="Butcher D.N."/>
            <person name="Nicholson A.G."/>
            <person name="Klein G."/>
            <person name="Imreh S."/>
            <person name="Boshoff C."/>
        </authorList>
    </citation>
    <scope>INTERACTION WITH LIMD1</scope>
</reference>
<reference key="45">
    <citation type="journal article" date="2005" name="J. Biochem.">
        <title>Preferences for phosphorylation sites in the retinoblastoma protein of D-type cyclin-dependent kinases, Cdk4 and Cdk6, in vitro.</title>
        <authorList>
            <person name="Takaki T."/>
            <person name="Fukasawa K."/>
            <person name="Suzuki-Takahashi I."/>
            <person name="Semba K."/>
            <person name="Kitagawa M."/>
            <person name="Taya Y."/>
            <person name="Hirai H."/>
        </authorList>
    </citation>
    <scope>PHOSPHORYLATION AT THR-821 AND THR-826</scope>
</reference>
<reference key="46">
    <citation type="journal article" date="2005" name="J. Biol. Chem.">
        <title>Functional characterization of JMJD2A, a histone deacetylase- and retinoblastoma-binding protein.</title>
        <authorList>
            <person name="Gray S.G."/>
            <person name="Iglesias A.H."/>
            <person name="Lizcano F."/>
            <person name="Villanueva R."/>
            <person name="Camelo S."/>
            <person name="Jingu H."/>
            <person name="Teh B.T."/>
            <person name="Koibuchi N."/>
            <person name="Chin W.W."/>
            <person name="Kokkotou E."/>
            <person name="Dangond F."/>
        </authorList>
    </citation>
    <scope>INTERACTION WITH KDM4A</scope>
</reference>
<reference key="47">
    <citation type="journal article" date="2005" name="Mod. Pathol.">
        <title>Retinoblastoma-binding protein 2-homolog 1: a retinoblastoma-binding protein downregulated in malignant melanomas.</title>
        <authorList>
            <person name="Roesch A."/>
            <person name="Becker B."/>
            <person name="Meyer S."/>
            <person name="Wild P."/>
            <person name="Hafner C."/>
            <person name="Landthaler M."/>
            <person name="Vogt T."/>
        </authorList>
    </citation>
    <scope>INTERACTION WITH KDM5B</scope>
</reference>
<reference key="48">
    <citation type="journal article" date="2005" name="Mol. Cell">
        <title>Binding of pRB to the PHD protein RBP2 promotes cellular differentiation.</title>
        <authorList>
            <person name="Benevolenskaya E.V."/>
            <person name="Murray H.L."/>
            <person name="Branton P."/>
            <person name="Young R.A."/>
            <person name="Kaelin W.G. Jr."/>
        </authorList>
    </citation>
    <scope>INTERACTION WITH KDM5A</scope>
</reference>
<reference key="49">
    <citation type="journal article" date="2005" name="Mol. Cell">
        <title>MDM2 promotes proteasome-dependent ubiquitin-independent degradation of retinoblastoma protein.</title>
        <authorList>
            <person name="Sdek P."/>
            <person name="Ying H."/>
            <person name="Chang D.L."/>
            <person name="Qiu W."/>
            <person name="Zheng H."/>
            <person name="Touitou R."/>
            <person name="Allday M.J."/>
            <person name="Xiao Z.X."/>
        </authorList>
    </citation>
    <scope>INTERACTION WITH PSMA3</scope>
</reference>
<reference key="50">
    <citation type="journal article" date="2005" name="Proc. Natl. Acad. Sci. U.S.A.">
        <title>p600, a unique protein required for membrane morphogenesis and cell survival.</title>
        <authorList>
            <person name="Nakatani Y."/>
            <person name="Konishi H."/>
            <person name="Vassilev A."/>
            <person name="Kurooka H."/>
            <person name="Ishiguro K."/>
            <person name="Sawada J."/>
            <person name="Ikura T."/>
            <person name="Korsmeyer S.J."/>
            <person name="Qin J."/>
            <person name="Herlitz A.M."/>
        </authorList>
    </citation>
    <scope>INTERACTION WITH ZUBR1</scope>
</reference>
<reference key="51">
    <citation type="journal article" date="2006" name="J. Invest. Dermatol.">
        <title>Re-expression of the retinoblastoma-binding protein 2-homolog 1 reveals tumor-suppressive functions in highly metastatic melanoma cells.</title>
        <authorList>
            <person name="Roesch A."/>
            <person name="Becker B."/>
            <person name="Schneider-Brachert W."/>
            <person name="Hagen I."/>
            <person name="Landthaler M."/>
            <person name="Vogt T."/>
        </authorList>
    </citation>
    <scope>INTERACTION WITH KDM5B</scope>
</reference>
<reference key="52">
    <citation type="journal article" date="2007" name="EMBO J.">
        <title>Phosphorylation of pRB at Ser612 by Chk1/2 leads to a complex between pRB and E2F-1 after DNA damage.</title>
        <authorList>
            <person name="Inoue Y."/>
            <person name="Kitagawa M."/>
            <person name="Taya Y."/>
        </authorList>
    </citation>
    <scope>PHOSPHORYLATION AT SER-612 BY CHEK2</scope>
    <scope>INTERACTION WITH CHEK2</scope>
</reference>
<reference key="53">
    <citation type="journal article" date="2008" name="J. Proteome Res.">
        <title>Combining protein-based IMAC, peptide-based IMAC, and MudPIT for efficient phosphoproteomic analysis.</title>
        <authorList>
            <person name="Cantin G.T."/>
            <person name="Yi W."/>
            <person name="Lu B."/>
            <person name="Park S.K."/>
            <person name="Xu T."/>
            <person name="Lee J.-D."/>
            <person name="Yates J.R. III"/>
        </authorList>
    </citation>
    <scope>PHOSPHORYLATION [LARGE SCALE ANALYSIS] AT SER-249; THR-252 AND THR-356</scope>
    <scope>IDENTIFICATION BY MASS SPECTROMETRY [LARGE SCALE ANALYSIS]</scope>
    <source>
        <tissue>Cervix carcinoma</tissue>
    </source>
</reference>
<reference key="54">
    <citation type="journal article" date="2008" name="J. Virol.">
        <title>Targeting the retinoblastoma protein by MC007L, gene product of the molluscum contagiosum virus: detection of a novel virus-cell interaction by a member of the poxviruses.</title>
        <authorList>
            <person name="Mohr S."/>
            <person name="Grandemange S."/>
            <person name="Massimi P."/>
            <person name="Darai G."/>
            <person name="Banks L."/>
            <person name="Martinou J.C."/>
            <person name="Zeier M."/>
            <person name="Muranyi W."/>
        </authorList>
    </citation>
    <scope>INTERACTION WITH MOLLUSCUM CONTAGIOSUM VIRUS PROTEIN MC007 (MICROBIAL FUNCTION)</scope>
</reference>
<reference key="55">
    <citation type="journal article" date="2008" name="Proc. Natl. Acad. Sci. U.S.A.">
        <title>A quantitative atlas of mitotic phosphorylation.</title>
        <authorList>
            <person name="Dephoure N."/>
            <person name="Zhou C."/>
            <person name="Villen J."/>
            <person name="Beausoleil S.A."/>
            <person name="Bakalarski C.E."/>
            <person name="Elledge S.J."/>
            <person name="Gygi S.P."/>
        </authorList>
    </citation>
    <scope>PHOSPHORYLATION [LARGE SCALE ANALYSIS] AT SER-37; SER-249; THR-252; SER-612; SER-807; SER-811; THR-823 AND THR-826</scope>
    <scope>IDENTIFICATION BY MASS SPECTROMETRY [LARGE SCALE ANALYSIS]</scope>
    <source>
        <tissue>Cervix carcinoma</tissue>
    </source>
</reference>
<reference key="56">
    <citation type="journal article" date="2009" name="Anal. Chem.">
        <title>Lys-N and trypsin cover complementary parts of the phosphoproteome in a refined SCX-based approach.</title>
        <authorList>
            <person name="Gauci S."/>
            <person name="Helbig A.O."/>
            <person name="Slijper M."/>
            <person name="Krijgsveld J."/>
            <person name="Heck A.J."/>
            <person name="Mohammed S."/>
        </authorList>
    </citation>
    <scope>IDENTIFICATION BY MASS SPECTROMETRY [LARGE SCALE ANALYSIS]</scope>
</reference>
<reference key="57">
    <citation type="journal article" date="2009" name="Sci. Signal.">
        <title>Quantitative phosphoproteomic analysis of T cell receptor signaling reveals system-wide modulation of protein-protein interactions.</title>
        <authorList>
            <person name="Mayya V."/>
            <person name="Lundgren D.H."/>
            <person name="Hwang S.-I."/>
            <person name="Rezaul K."/>
            <person name="Wu L."/>
            <person name="Eng J.K."/>
            <person name="Rodionov V."/>
            <person name="Han D.K."/>
        </authorList>
    </citation>
    <scope>PHOSPHORYLATION [LARGE SCALE ANALYSIS] AT SER-37; SER-249; THR-373; SER-807 AND THR-841</scope>
    <scope>IDENTIFICATION BY MASS SPECTROMETRY [LARGE SCALE ANALYSIS]</scope>
    <source>
        <tissue>Leukemic T-cell</tissue>
    </source>
</reference>
<reference key="58">
    <citation type="journal article" date="2009" name="Science">
        <title>Lysine acetylation targets protein complexes and co-regulates major cellular functions.</title>
        <authorList>
            <person name="Choudhary C."/>
            <person name="Kumar C."/>
            <person name="Gnad F."/>
            <person name="Nielsen M.L."/>
            <person name="Rehman M."/>
            <person name="Walther T.C."/>
            <person name="Olsen J.V."/>
            <person name="Mann M."/>
        </authorList>
    </citation>
    <scope>IDENTIFICATION BY MASS SPECTROMETRY [LARGE SCALE ANALYSIS]</scope>
</reference>
<reference key="59">
    <citation type="journal article" date="2010" name="J. Biol. Chem.">
        <title>Methylation of the retinoblastoma tumor suppressor by SMYD2.</title>
        <authorList>
            <person name="Saddic L.A."/>
            <person name="West L.E."/>
            <person name="Aslanian A."/>
            <person name="Yates J.R. III"/>
            <person name="Rubin S.M."/>
            <person name="Gozani O."/>
            <person name="Sage J."/>
        </authorList>
    </citation>
    <scope>METHYLATION AT LYS-860</scope>
    <scope>INTERACTION WITH L3MBTL1</scope>
    <scope>MUTAGENESIS OF LYS-860; LYS-870 AND 873-LYS-LYS-874</scope>
</reference>
<reference key="60">
    <citation type="journal article" date="2010" name="J. Cell Sci.">
        <title>Acetylation of Rb by PCAF is required for nuclear localization and keratinocyte differentiation.</title>
        <authorList>
            <person name="Pickard A."/>
            <person name="Wong P.P."/>
            <person name="McCance D.J."/>
        </authorList>
    </citation>
    <scope>SUBCELLULAR LOCATION</scope>
    <scope>TISSUE SPECIFICITY</scope>
    <scope>ACETYLATION AT LYS-873 AND LYS-874</scope>
    <scope>MUTAGENESIS OF 873-LYS--LYS-874</scope>
</reference>
<reference key="61">
    <citation type="journal article" date="2010" name="Sci. Signal.">
        <title>Quantitative phosphoproteomics reveals widespread full phosphorylation site occupancy during mitosis.</title>
        <authorList>
            <person name="Olsen J.V."/>
            <person name="Vermeulen M."/>
            <person name="Santamaria A."/>
            <person name="Kumar C."/>
            <person name="Miller M.L."/>
            <person name="Jensen L.J."/>
            <person name="Gnad F."/>
            <person name="Cox J."/>
            <person name="Jensen T.S."/>
            <person name="Nigg E.A."/>
            <person name="Brunak S."/>
            <person name="Mann M."/>
        </authorList>
    </citation>
    <scope>PHOSPHORYLATION [LARGE SCALE ANALYSIS] AT THR-821 AND THR-826</scope>
    <scope>IDENTIFICATION BY MASS SPECTROMETRY [LARGE SCALE ANALYSIS]</scope>
    <source>
        <tissue>Cervix carcinoma</tissue>
    </source>
</reference>
<reference key="62">
    <citation type="journal article" date="2011" name="BMC Syst. Biol.">
        <title>Initial characterization of the human central proteome.</title>
        <authorList>
            <person name="Burkard T.R."/>
            <person name="Planyavsky M."/>
            <person name="Kaupe I."/>
            <person name="Breitwieser F.P."/>
            <person name="Buerckstuemmer T."/>
            <person name="Bennett K.L."/>
            <person name="Superti-Furga G."/>
            <person name="Colinge J."/>
        </authorList>
    </citation>
    <scope>IDENTIFICATION BY MASS SPECTROMETRY [LARGE SCALE ANALYSIS]</scope>
</reference>
<reference key="63">
    <citation type="journal article" date="2011" name="Cell Cycle">
        <title>NIRF constitutes a nodal point in the cell cycle network and is a candidate tumor suppressor.</title>
        <authorList>
            <person name="Mori T."/>
            <person name="Ikeda D.D."/>
            <person name="Fukushima T."/>
            <person name="Takenoshita S."/>
            <person name="Kochi H."/>
        </authorList>
    </citation>
    <scope>INTERACTION WITH UHRF2</scope>
</reference>
<reference key="64">
    <citation type="journal article" date="2011" name="Sci. Signal.">
        <title>System-wide temporal characterization of the proteome and phosphoproteome of human embryonic stem cell differentiation.</title>
        <authorList>
            <person name="Rigbolt K.T."/>
            <person name="Prokhorova T.A."/>
            <person name="Akimov V."/>
            <person name="Henningsen J."/>
            <person name="Johansen P.T."/>
            <person name="Kratchmarova I."/>
            <person name="Kassem M."/>
            <person name="Mann M."/>
            <person name="Olsen J.V."/>
            <person name="Blagoev B."/>
        </authorList>
    </citation>
    <scope>PHOSPHORYLATION [LARGE SCALE ANALYSIS] AT SER-249</scope>
    <scope>IDENTIFICATION BY MASS SPECTROMETRY [LARGE SCALE ANALYSIS]</scope>
</reference>
<reference key="65">
    <citation type="journal article" date="2012" name="Neoplasia">
        <title>RB1 methylation by SMYD2 enhances cell cycle progression through an increase of RB1 phosphorylation.</title>
        <authorList>
            <person name="Cho H.S."/>
            <person name="Hayami S."/>
            <person name="Toyokawa G."/>
            <person name="Maejima K."/>
            <person name="Yamane Y."/>
            <person name="Suzuki T."/>
            <person name="Dohmae N."/>
            <person name="Kogure M."/>
            <person name="Kang D."/>
            <person name="Neal D.E."/>
            <person name="Ponder B.A."/>
            <person name="Yamaue H."/>
            <person name="Nakamura Y."/>
            <person name="Hamamoto R."/>
        </authorList>
    </citation>
    <scope>METHYLATION AT LYS-810 BY SMYD2</scope>
</reference>
<reference key="66">
    <citation type="journal article" date="2013" name="J. Proteome Res.">
        <title>Toward a comprehensive characterization of a human cancer cell phosphoproteome.</title>
        <authorList>
            <person name="Zhou H."/>
            <person name="Di Palma S."/>
            <person name="Preisinger C."/>
            <person name="Peng M."/>
            <person name="Polat A.N."/>
            <person name="Heck A.J."/>
            <person name="Mohammed S."/>
        </authorList>
    </citation>
    <scope>PHOSPHORYLATION [LARGE SCALE ANALYSIS] AT SER-249; THR-252; THR-356; THR-373; SER-624; SER-780; SER-788; SER-795; SER-807; SER-811; THR-821; THR-823; THR-826 AND SER-855</scope>
    <scope>IDENTIFICATION BY MASS SPECTROMETRY [LARGE SCALE ANALYSIS]</scope>
    <source>
        <tissue>Cervix carcinoma</tissue>
        <tissue>Erythroleukemia</tissue>
    </source>
</reference>
<reference key="67">
    <citation type="journal article" date="2014" name="J. Proteomics">
        <title>An enzyme assisted RP-RPLC approach for in-depth analysis of human liver phosphoproteome.</title>
        <authorList>
            <person name="Bian Y."/>
            <person name="Song C."/>
            <person name="Cheng K."/>
            <person name="Dong M."/>
            <person name="Wang F."/>
            <person name="Huang J."/>
            <person name="Sun D."/>
            <person name="Wang L."/>
            <person name="Ye M."/>
            <person name="Zou H."/>
        </authorList>
    </citation>
    <scope>PHOSPHORYLATION [LARGE SCALE ANALYSIS] AT SER-37</scope>
    <scope>IDENTIFICATION BY MASS SPECTROMETRY [LARGE SCALE ANALYSIS]</scope>
    <source>
        <tissue>Liver</tissue>
    </source>
</reference>
<reference key="68">
    <citation type="journal article" date="2016" name="Oncol. Rep.">
        <title>BLCAP arrests G(1)/S checkpoint and induces apoptosis through downregulation of pRb1 in HeLa cells.</title>
        <authorList>
            <person name="Zhao M."/>
            <person name="Zhang L."/>
            <person name="Qiu X."/>
            <person name="Zeng F."/>
            <person name="Chen W."/>
            <person name="An Y."/>
            <person name="Hu B."/>
            <person name="Wu X."/>
            <person name="Wu X."/>
        </authorList>
    </citation>
    <scope>INTERACTION WITH BLCAP</scope>
</reference>
<reference key="69">
    <citation type="journal article" date="1997" name="Nat. Struct. Biol.">
        <title>Structural similarity between the pocket region of retinoblastoma tumour suppressor and the cyclin-box.</title>
        <authorList>
            <person name="Kim H.Y."/>
            <person name="Cho Y."/>
        </authorList>
    </citation>
    <scope>X-RAY CRYSTALLOGRAPHY (2.3 ANGSTROMS) OF 378-562</scope>
</reference>
<reference key="70">
    <citation type="journal article" date="1998" name="Nature">
        <title>Structure of the retinoblastoma tumour-suppressor pocket domain bound to a peptide from HPV E7.</title>
        <authorList>
            <person name="Lee J.O."/>
            <person name="Russo A.A."/>
            <person name="Pavletich N.P."/>
        </authorList>
    </citation>
    <scope>X-RAY CRYSTALLOGRAPHY (1.85 ANGSTROMS) OF 380-785</scope>
</reference>
<reference key="71">
    <citation type="journal article" date="2003" name="J. Biol. Chem.">
        <title>Structural basis for the specificity of bipartite nuclear localization sequence binding by importin-alpha.</title>
        <authorList>
            <person name="Fontes M.R.M."/>
            <person name="Teh T."/>
            <person name="Jans D."/>
            <person name="Brinkworth R.I."/>
            <person name="Kobe B."/>
        </authorList>
    </citation>
    <scope>X-RAY CRYSTALLOGRAPHY (2.5 ANGSTROMS) OF 860-876 IN COMPLEX WITH KPNA2</scope>
</reference>
<reference key="72">
    <citation type="journal article" date="2005" name="Cell">
        <title>Structure of the Rb C-terminal domain bound to E2F1-DP1: a mechanism for phosphorylation-induced E2F release.</title>
        <authorList>
            <person name="Rubin S.M."/>
            <person name="Gall A.-L."/>
            <person name="Zheng N."/>
            <person name="Pavletich N.P."/>
        </authorList>
    </citation>
    <scope>X-RAY CRYSTALLOGRAPHY (2.55 ANGSTROMS) OF 829-874 IN COMPLEX WITH E2F1 AND TFDP1</scope>
    <scope>INTERACTION WITH HETERODIMERIC COMPLEXES CONTAINING TFDP1 AND EITHER E2F1; E2F3; E2F4 OR E2F5</scope>
    <scope>MUTAGENESIS OF THR-821 AND THR-826</scope>
    <scope>PHOSPHORYLATION AT THR-821 AND THR-826</scope>
</reference>
<reference key="73">
    <citation type="journal article" date="2007" name="Genes Dev.">
        <title>Structure of the retinoblastoma protein bound to adenovirus E1A reveals the molecular basis for viral oncoprotein inactivation of a tumor suppressor.</title>
        <authorList>
            <person name="Liu X."/>
            <person name="Marmorstein R."/>
        </authorList>
    </citation>
    <scope>X-RAY CRYSTALLOGRAPHY (1.67 ANGSTROMS) OF 380-787 IN COMPLEX WITH HUMAN ADENOVIRUS E1A PROTEIN (MICROBIAL INFECTION)</scope>
</reference>
<reference key="74">
    <citation type="journal article" date="2007" name="Mol. Cell">
        <title>Crystal structure of the retinoblastoma protein N domain provides insight into tumor suppression, ligand interaction, and holoprotein architecture.</title>
        <authorList>
            <person name="Hassler M."/>
            <person name="Singh S."/>
            <person name="Yue W.W."/>
            <person name="Luczynski M."/>
            <person name="Lakbir R."/>
            <person name="Sanchez-Sanchez F."/>
            <person name="Bader T."/>
            <person name="Pearl L.H."/>
            <person name="Mittnacht S."/>
        </authorList>
    </citation>
    <scope>X-RAY CRYSTALLOGRAPHY (2.0 ANGSTROMS) OF 52-355</scope>
    <scope>PARTIAL PROTEIN SEQUENCE</scope>
    <scope>IDENTIFICATION BY MASS SPECTROMETRY</scope>
    <scope>INTERACTION WITH THOC1 AND GRIP1</scope>
    <scope>INTERACTION OF THE UNPHOSPHORYLATED PROTEIN WITH EID1</scope>
</reference>
<reference key="75">
    <citation type="journal article" date="1989" name="N. Engl. J. Med.">
        <title>Oncogenic point mutations in the human retinoblastoma gene: their application to genetic counseling.</title>
        <authorList>
            <person name="Yandell D.W."/>
            <person name="Campbell T.A."/>
            <person name="Dayton S.H."/>
            <person name="Petersen R."/>
            <person name="Walton D."/>
            <person name="Little J.B."/>
            <person name="McConkie-Rosell A."/>
            <person name="Buckley E."/>
            <person name="Dryja T.P."/>
        </authorList>
    </citation>
    <scope>VARIANT RB LEU-567</scope>
</reference>
<reference key="76">
    <citation type="journal article" date="1992" name="Proc. Natl. Acad. Sci. U.S.A.">
        <title>Oncogenic point mutations in exon 20 of the RB1 gene in families showing incomplete penetrance and mild expression of the retinoblastoma phenotype.</title>
        <authorList>
            <person name="Onadim Z."/>
            <person name="Hogg A."/>
            <person name="Baird P.N."/>
            <person name="Cowell J.K."/>
        </authorList>
    </citation>
    <scope>VARIANT RB TRP-661</scope>
</reference>
<reference key="77">
    <citation type="journal article" date="1993" name="Proc. Natl. Acad. Sci. U.S.A.">
        <title>Molecular mechanisms of oncogenic mutations in tumors from patients with bilateral and unilateral retinoblastoma.</title>
        <authorList>
            <person name="Hogg A."/>
            <person name="Bia B."/>
            <person name="Onadim Z."/>
            <person name="Cowell J.K."/>
        </authorList>
    </citation>
    <scope>VARIANT RB ARG-457</scope>
</reference>
<reference key="78">
    <citation type="journal article" date="1994" name="Eur. J. Hum. Genet.">
        <title>Frequent constitutional C to T mutations in CGA-arginine codons in the RB1 gene produce premature stop codons in patients with bilateral (hereditary) retinoblastoma.</title>
        <authorList>
            <person name="Cowell J.K."/>
            <person name="Smith T."/>
            <person name="Bia B."/>
        </authorList>
    </citation>
    <scope>VARIANT RB ARG-530</scope>
</reference>
<reference key="79">
    <citation type="journal article" date="1994" name="Hum. Genet.">
        <title>Distinct RB1 gene mutations with low penetrance in hereditary retinoblastoma.</title>
        <authorList>
            <person name="Lohmann D.R."/>
            <person name="Brandt B."/>
            <person name="Hoepping W."/>
            <person name="Passarge E."/>
            <person name="Horsthemke B."/>
        </authorList>
    </citation>
    <scope>VARIANTS RB ASN-480 DEL AND TRP-661</scope>
</reference>
<reference key="80">
    <citation type="journal article" date="1994" name="Hum. Mutat.">
        <title>Mutations in the retinoblastoma gene and their expression in somatic and tumor cells of patients with hereditary retinoblastoma.</title>
        <authorList>
            <person name="Kato M.V."/>
            <person name="Ishizaki K."/>
            <person name="Toguchida J."/>
            <person name="Kaneko A."/>
            <person name="Takayama J."/>
            <person name="Tanooka H."/>
            <person name="Kato T."/>
            <person name="Shimizu T."/>
            <person name="Sasaki M.S."/>
        </authorList>
    </citation>
    <scope>VARIANT RB TYR-706</scope>
</reference>
<reference key="81">
    <citation type="journal article" date="1995" name="Genes Chromosomes Cancer">
        <title>Germline mutations in the RB1 gene in patients with hereditary retinoblastoma.</title>
        <authorList>
            <person name="Liu Z."/>
            <person name="Song Y."/>
            <person name="Bia B."/>
            <person name="Cowell J.K."/>
        </authorList>
    </citation>
    <scope>VARIANTS RB GLN-72; TYR-549 AND LYS-803</scope>
</reference>
<reference key="82">
    <citation type="journal article" date="1995" name="Hum. Mol. Genet.">
        <title>Spectrum of germline mutations in the RB1 gene: a study of 232 patients with hereditary and non hereditary retinoblastoma.</title>
        <authorList>
            <person name="Blanquet V."/>
            <person name="Turleau C."/>
            <person name="Gross-Morand M.S."/>
            <person name="Senamaud-Beaufort C."/>
            <person name="Doz F."/>
            <person name="Besmond C."/>
        </authorList>
    </citation>
    <scope>VARIANTS RB THR-185; PRO-635; GLU-654 AND PRO-685</scope>
</reference>
<reference key="83">
    <citation type="journal article" date="1996" name="Hum. Mol. Genet.">
        <title>Mutational scanning of large genes by extensive PCR multiplexing and two-dimensional electrophoresis: application to the RB1 gene.</title>
        <authorList>
            <person name="Van Orsouw N.J."/>
            <person name="Li D."/>
            <person name="van der Vlies P."/>
            <person name="Scheffer H."/>
            <person name="Eng C."/>
            <person name="Buys C.H.C.M."/>
            <person name="Li F.P."/>
            <person name="Vijg J."/>
        </authorList>
    </citation>
    <scope>VARIANTS RB GLY-358; PRO-657 AND TRP-661</scope>
</reference>
<reference key="84">
    <citation type="journal article" date="1997" name="Am. J. Hum. Genet.">
        <title>Constitutional RB1-gene mutations in patients with isolated unilateral retinoblastoma.</title>
        <authorList>
            <person name="Lohmann D.R."/>
            <person name="Gerick M."/>
            <person name="Brandt B."/>
            <person name="Oelschlaeger U."/>
            <person name="Lorenz B."/>
            <person name="Passarge E."/>
            <person name="Horsthemke B."/>
        </authorList>
    </citation>
    <scope>VARIANTS RB ASP-137 AND TRP-661</scope>
</reference>
<reference key="85">
    <citation type="journal article" date="1997" name="Cancer Genet. Cytogenet.">
        <title>Genetics of retinoblastoma: a study.</title>
        <authorList>
            <person name="Mateu E."/>
            <person name="Sanchez F."/>
            <person name="Najera C."/>
            <person name="Beneyto M."/>
            <person name="Castell V."/>
            <person name="Hernandez M."/>
            <person name="Serra I."/>
            <person name="Prieto F."/>
        </authorList>
    </citation>
    <scope>VARIANT RB GLN-447</scope>
</reference>
<reference key="86">
    <citation type="journal article" date="1998" name="Hum. Mutat.">
        <title>Twelve novel RB1 gene mutations in patients with hereditary retinoblastoma.</title>
        <authorList>
            <person name="Yilmaz S."/>
            <person name="Horsthemke B."/>
            <person name="Lohmann D.R."/>
        </authorList>
    </citation>
    <scope>VARIANTS RB LEU-567; PRO-662 AND ARG-712</scope>
</reference>
<reference key="87">
    <citation type="journal article" date="1999" name="Am. J. Hum. Genet.">
        <title>RB1 gene mutations in peripheral blood DNA of patients with isolated unilateral retinoblastoma.</title>
        <authorList>
            <person name="Klutz M."/>
            <person name="Horsthemke B."/>
            <person name="Lohmann D.R."/>
        </authorList>
    </citation>
    <scope>VARIANT RB GLU-310</scope>
</reference>
<reference key="88">
    <citation type="journal article" date="2001" name="Hum. Mutat.">
        <title>Identification of four novel RB1 germline mutations in Korean retinoblastoma patients.</title>
        <authorList>
            <person name="Yu Y.S."/>
            <person name="Kim I.-J."/>
            <person name="Ku J.-L."/>
            <person name="Park J.-G."/>
        </authorList>
    </citation>
    <scope>VARIANTS RB GLY-500 AND GLU-616</scope>
</reference>
<reference key="89">
    <citation type="journal article" date="2012" name="N. Engl. J. Med.">
        <title>Diagnostic exome sequencing in persons with severe intellectual disability.</title>
        <authorList>
            <person name="de Ligt J."/>
            <person name="Willemsen M.H."/>
            <person name="van Bon B.W."/>
            <person name="Kleefstra T."/>
            <person name="Yntema H.G."/>
            <person name="Kroes T."/>
            <person name="Vulto-van Silfhout A.T."/>
            <person name="Koolen D.A."/>
            <person name="de Vries P."/>
            <person name="Gilissen C."/>
            <person name="del Rosario M."/>
            <person name="Hoischen A."/>
            <person name="Scheffer H."/>
            <person name="de Vries B.B."/>
            <person name="Brunner H.G."/>
            <person name="Veltman J.A."/>
            <person name="Vissers L.E."/>
        </authorList>
    </citation>
    <scope>VARIANT HIS-173</scope>
</reference>
<dbReference type="EMBL" id="M15400">
    <property type="protein sequence ID" value="AAA69807.1"/>
    <property type="status" value="ALT_SEQ"/>
    <property type="molecule type" value="mRNA"/>
</dbReference>
<dbReference type="EMBL" id="M28419">
    <property type="protein sequence ID" value="AAA69808.1"/>
    <property type="molecule type" value="mRNA"/>
</dbReference>
<dbReference type="EMBL" id="M33647">
    <property type="protein sequence ID" value="AAA69806.1"/>
    <property type="molecule type" value="mRNA"/>
</dbReference>
<dbReference type="EMBL" id="L41870">
    <property type="protein sequence ID" value="AAB59465.1"/>
    <property type="molecule type" value="mRNA"/>
</dbReference>
<dbReference type="EMBL" id="M27866">
    <property type="protein sequence ID" value="AAA53484.1"/>
    <property type="molecule type" value="Genomic_DNA"/>
</dbReference>
<dbReference type="EMBL" id="M27845">
    <property type="protein sequence ID" value="AAA53484.1"/>
    <property type="status" value="JOINED"/>
    <property type="molecule type" value="Genomic_DNA"/>
</dbReference>
<dbReference type="EMBL" id="M27846">
    <property type="protein sequence ID" value="AAA53484.1"/>
    <property type="status" value="JOINED"/>
    <property type="molecule type" value="Genomic_DNA"/>
</dbReference>
<dbReference type="EMBL" id="M27847">
    <property type="protein sequence ID" value="AAA53484.1"/>
    <property type="status" value="JOINED"/>
    <property type="molecule type" value="Genomic_DNA"/>
</dbReference>
<dbReference type="EMBL" id="M27849">
    <property type="protein sequence ID" value="AAA53484.1"/>
    <property type="status" value="JOINED"/>
    <property type="molecule type" value="Genomic_DNA"/>
</dbReference>
<dbReference type="EMBL" id="M27850">
    <property type="protein sequence ID" value="AAA53484.1"/>
    <property type="status" value="JOINED"/>
    <property type="molecule type" value="Genomic_DNA"/>
</dbReference>
<dbReference type="EMBL" id="M27851">
    <property type="protein sequence ID" value="AAA53484.1"/>
    <property type="status" value="JOINED"/>
    <property type="molecule type" value="Genomic_DNA"/>
</dbReference>
<dbReference type="EMBL" id="L35146">
    <property type="protein sequence ID" value="AAA53484.1"/>
    <property type="status" value="JOINED"/>
    <property type="molecule type" value="Genomic_DNA"/>
</dbReference>
<dbReference type="EMBL" id="M27852">
    <property type="protein sequence ID" value="AAA53484.1"/>
    <property type="status" value="JOINED"/>
    <property type="molecule type" value="Genomic_DNA"/>
</dbReference>
<dbReference type="EMBL" id="M27853">
    <property type="protein sequence ID" value="AAA53484.1"/>
    <property type="status" value="JOINED"/>
    <property type="molecule type" value="Genomic_DNA"/>
</dbReference>
<dbReference type="EMBL" id="M27854">
    <property type="protein sequence ID" value="AAA53484.1"/>
    <property type="status" value="JOINED"/>
    <property type="molecule type" value="Genomic_DNA"/>
</dbReference>
<dbReference type="EMBL" id="M27855">
    <property type="protein sequence ID" value="AAA53484.1"/>
    <property type="status" value="JOINED"/>
    <property type="molecule type" value="Genomic_DNA"/>
</dbReference>
<dbReference type="EMBL" id="M27856">
    <property type="protein sequence ID" value="AAA53484.1"/>
    <property type="status" value="JOINED"/>
    <property type="molecule type" value="Genomic_DNA"/>
</dbReference>
<dbReference type="EMBL" id="M27857">
    <property type="protein sequence ID" value="AAA53484.1"/>
    <property type="status" value="JOINED"/>
    <property type="molecule type" value="Genomic_DNA"/>
</dbReference>
<dbReference type="EMBL" id="M27858">
    <property type="protein sequence ID" value="AAA53484.1"/>
    <property type="status" value="JOINED"/>
    <property type="molecule type" value="Genomic_DNA"/>
</dbReference>
<dbReference type="EMBL" id="M27859">
    <property type="protein sequence ID" value="AAA53484.1"/>
    <property type="status" value="JOINED"/>
    <property type="molecule type" value="Genomic_DNA"/>
</dbReference>
<dbReference type="EMBL" id="M27860">
    <property type="protein sequence ID" value="AAA53484.1"/>
    <property type="status" value="JOINED"/>
    <property type="molecule type" value="Genomic_DNA"/>
</dbReference>
<dbReference type="EMBL" id="L35147">
    <property type="protein sequence ID" value="AAA53484.1"/>
    <property type="status" value="JOINED"/>
    <property type="molecule type" value="Genomic_DNA"/>
</dbReference>
<dbReference type="EMBL" id="M27862">
    <property type="protein sequence ID" value="AAA53484.1"/>
    <property type="status" value="JOINED"/>
    <property type="molecule type" value="Genomic_DNA"/>
</dbReference>
<dbReference type="EMBL" id="M27863">
    <property type="protein sequence ID" value="AAA53484.1"/>
    <property type="status" value="JOINED"/>
    <property type="molecule type" value="Genomic_DNA"/>
</dbReference>
<dbReference type="EMBL" id="M27864">
    <property type="protein sequence ID" value="AAA53484.1"/>
    <property type="status" value="JOINED"/>
    <property type="molecule type" value="Genomic_DNA"/>
</dbReference>
<dbReference type="EMBL" id="M27865">
    <property type="protein sequence ID" value="AAA53484.1"/>
    <property type="status" value="JOINED"/>
    <property type="molecule type" value="Genomic_DNA"/>
</dbReference>
<dbReference type="EMBL" id="L41889">
    <property type="protein sequence ID" value="AAB59467.1"/>
    <property type="molecule type" value="Genomic_DNA"/>
</dbReference>
<dbReference type="EMBL" id="L41890">
    <property type="protein sequence ID" value="AAA65735.1"/>
    <property type="molecule type" value="Genomic_DNA"/>
</dbReference>
<dbReference type="EMBL" id="L41891">
    <property type="protein sequence ID" value="AAA65736.1"/>
    <property type="molecule type" value="Genomic_DNA"/>
</dbReference>
<dbReference type="EMBL" id="L41893">
    <property type="protein sequence ID" value="AAA65737.1"/>
    <property type="molecule type" value="Genomic_DNA"/>
</dbReference>
<dbReference type="EMBL" id="L41894">
    <property type="protein sequence ID" value="AAA65738.1"/>
    <property type="molecule type" value="Genomic_DNA"/>
</dbReference>
<dbReference type="EMBL" id="L41895">
    <property type="protein sequence ID" value="AAA65739.1"/>
    <property type="molecule type" value="Genomic_DNA"/>
</dbReference>
<dbReference type="EMBL" id="L41896">
    <property type="protein sequence ID" value="AAA65740.1"/>
    <property type="molecule type" value="Genomic_DNA"/>
</dbReference>
<dbReference type="EMBL" id="L41897">
    <property type="protein sequence ID" value="AAA65741.1"/>
    <property type="molecule type" value="Genomic_DNA"/>
</dbReference>
<dbReference type="EMBL" id="L41898">
    <property type="protein sequence ID" value="AAB59471.1"/>
    <property type="molecule type" value="Genomic_DNA"/>
</dbReference>
<dbReference type="EMBL" id="L41899">
    <property type="protein sequence ID" value="AAB59473.1"/>
    <property type="molecule type" value="Genomic_DNA"/>
</dbReference>
<dbReference type="EMBL" id="L41997">
    <property type="protein sequence ID" value="AAB59482.1"/>
    <property type="molecule type" value="Genomic_DNA"/>
</dbReference>
<dbReference type="EMBL" id="X16439">
    <property type="protein sequence ID" value="CAA34462.1"/>
    <property type="molecule type" value="Genomic_DNA"/>
</dbReference>
<dbReference type="EMBL" id="AF551763">
    <property type="protein sequence ID" value="AAN64133.1"/>
    <property type="molecule type" value="Genomic_DNA"/>
</dbReference>
<dbReference type="EMBL" id="AK291258">
    <property type="protein sequence ID" value="BAF83947.1"/>
    <property type="molecule type" value="mRNA"/>
</dbReference>
<dbReference type="EMBL" id="AL136960">
    <property type="status" value="NOT_ANNOTATED_CDS"/>
    <property type="molecule type" value="Genomic_DNA"/>
</dbReference>
<dbReference type="EMBL" id="AL392048">
    <property type="status" value="NOT_ANNOTATED_CDS"/>
    <property type="molecule type" value="Genomic_DNA"/>
</dbReference>
<dbReference type="EMBL" id="CH471075">
    <property type="protein sequence ID" value="EAX08793.1"/>
    <property type="molecule type" value="Genomic_DNA"/>
</dbReference>
<dbReference type="EMBL" id="BC039060">
    <property type="protein sequence ID" value="AAH39060.1"/>
    <property type="molecule type" value="mRNA"/>
</dbReference>
<dbReference type="EMBL" id="BC040540">
    <property type="protein sequence ID" value="AAH40540.1"/>
    <property type="molecule type" value="mRNA"/>
</dbReference>
<dbReference type="EMBL" id="L11910">
    <property type="protein sequence ID" value="AAA53483.1"/>
    <property type="molecule type" value="Genomic_DNA"/>
</dbReference>
<dbReference type="CCDS" id="CCDS31973.1"/>
<dbReference type="PIR" id="JS0276">
    <property type="entry name" value="RBHU"/>
</dbReference>
<dbReference type="RefSeq" id="NP_000312.2">
    <property type="nucleotide sequence ID" value="NM_000321.3"/>
</dbReference>
<dbReference type="PDB" id="1AD6">
    <property type="method" value="X-ray"/>
    <property type="resolution" value="2.30 A"/>
    <property type="chains" value="A=378-562"/>
</dbReference>
<dbReference type="PDB" id="1GH6">
    <property type="method" value="X-ray"/>
    <property type="resolution" value="3.20 A"/>
    <property type="chains" value="B=379-577, B=645-772"/>
</dbReference>
<dbReference type="PDB" id="1GUX">
    <property type="method" value="X-ray"/>
    <property type="resolution" value="1.85 A"/>
    <property type="chains" value="A=372-589, B=636-787"/>
</dbReference>
<dbReference type="PDB" id="1H25">
    <property type="method" value="X-ray"/>
    <property type="resolution" value="2.50 A"/>
    <property type="chains" value="E=868-878"/>
</dbReference>
<dbReference type="PDB" id="1N4M">
    <property type="method" value="X-ray"/>
    <property type="resolution" value="2.20 A"/>
    <property type="chains" value="A/B=380-785"/>
</dbReference>
<dbReference type="PDB" id="1O9K">
    <property type="method" value="X-ray"/>
    <property type="resolution" value="2.60 A"/>
    <property type="chains" value="A/C/E/G=372-589, B/D/F/H=636-787"/>
</dbReference>
<dbReference type="PDB" id="1PJM">
    <property type="method" value="X-ray"/>
    <property type="resolution" value="2.50 A"/>
    <property type="chains" value="A=858-881"/>
</dbReference>
<dbReference type="PDB" id="2AZE">
    <property type="method" value="X-ray"/>
    <property type="resolution" value="2.55 A"/>
    <property type="chains" value="C=829-874"/>
</dbReference>
<dbReference type="PDB" id="2QDJ">
    <property type="method" value="X-ray"/>
    <property type="resolution" value="2.00 A"/>
    <property type="chains" value="A=52-355"/>
</dbReference>
<dbReference type="PDB" id="2R7G">
    <property type="method" value="X-ray"/>
    <property type="resolution" value="1.67 A"/>
    <property type="chains" value="A/C=380-787"/>
</dbReference>
<dbReference type="PDB" id="3N5U">
    <property type="method" value="X-ray"/>
    <property type="resolution" value="3.20 A"/>
    <property type="chains" value="C=870-882"/>
</dbReference>
<dbReference type="PDB" id="3POM">
    <property type="method" value="X-ray"/>
    <property type="resolution" value="2.50 A"/>
    <property type="chains" value="A/B=380-577, A/B=643-783"/>
</dbReference>
<dbReference type="PDB" id="4CRI">
    <property type="method" value="X-ray"/>
    <property type="resolution" value="2.35 A"/>
    <property type="chains" value="C/D=802-817"/>
</dbReference>
<dbReference type="PDB" id="4ELJ">
    <property type="method" value="X-ray"/>
    <property type="resolution" value="2.70 A"/>
    <property type="chains" value="A=53-787"/>
</dbReference>
<dbReference type="PDB" id="4ELL">
    <property type="method" value="X-ray"/>
    <property type="resolution" value="1.98 A"/>
    <property type="chains" value="A/B=380-787"/>
</dbReference>
<dbReference type="PDB" id="9DGK">
    <property type="method" value="X-ray"/>
    <property type="resolution" value="2.38 A"/>
    <property type="chains" value="A/B=380-793"/>
</dbReference>
<dbReference type="PDB" id="9DHC">
    <property type="method" value="X-ray"/>
    <property type="resolution" value="2.32 A"/>
    <property type="chains" value="A/B=380-793"/>
</dbReference>
<dbReference type="PDB" id="9DHF">
    <property type="method" value="X-ray"/>
    <property type="resolution" value="2.26 A"/>
    <property type="chains" value="A/B=380-793"/>
</dbReference>
<dbReference type="PDB" id="9DHU">
    <property type="method" value="X-ray"/>
    <property type="resolution" value="2.16 A"/>
    <property type="chains" value="A/B=380-786"/>
</dbReference>
<dbReference type="PDBsum" id="1AD6"/>
<dbReference type="PDBsum" id="1GH6"/>
<dbReference type="PDBsum" id="1GUX"/>
<dbReference type="PDBsum" id="1H25"/>
<dbReference type="PDBsum" id="1N4M"/>
<dbReference type="PDBsum" id="1O9K"/>
<dbReference type="PDBsum" id="1PJM"/>
<dbReference type="PDBsum" id="2AZE"/>
<dbReference type="PDBsum" id="2QDJ"/>
<dbReference type="PDBsum" id="2R7G"/>
<dbReference type="PDBsum" id="3N5U"/>
<dbReference type="PDBsum" id="3POM"/>
<dbReference type="PDBsum" id="4CRI"/>
<dbReference type="PDBsum" id="4ELJ"/>
<dbReference type="PDBsum" id="4ELL"/>
<dbReference type="PDBsum" id="9DGK"/>
<dbReference type="PDBsum" id="9DHC"/>
<dbReference type="PDBsum" id="9DHF"/>
<dbReference type="PDBsum" id="9DHU"/>
<dbReference type="SMR" id="P06400"/>
<dbReference type="BioGRID" id="111860">
    <property type="interactions" value="375"/>
</dbReference>
<dbReference type="ComplexPortal" id="CPX-155">
    <property type="entry name" value="RB1-E2F1-DP1 transcriptional repressor complex"/>
</dbReference>
<dbReference type="ComplexPortal" id="CPX-175">
    <property type="entry name" value="RB1-E2F2-DP1 transcriptional repressor complex"/>
</dbReference>
<dbReference type="ComplexPortal" id="CPX-469">
    <property type="entry name" value="L3MBTL1 complex"/>
</dbReference>
<dbReference type="ComplexPortal" id="CPX-7728">
    <property type="entry name" value="RB1-E2F3-DP1 transcriptional repressor complex"/>
</dbReference>
<dbReference type="CORUM" id="P06400"/>
<dbReference type="DIP" id="DIP-582N"/>
<dbReference type="FunCoup" id="P06400">
    <property type="interactions" value="3043"/>
</dbReference>
<dbReference type="IntAct" id="P06400">
    <property type="interactions" value="202"/>
</dbReference>
<dbReference type="MINT" id="P06400"/>
<dbReference type="STRING" id="9606.ENSP00000267163"/>
<dbReference type="BindingDB" id="P06400"/>
<dbReference type="ChEMBL" id="CHEMBL5288"/>
<dbReference type="GlyGen" id="P06400">
    <property type="glycosylation" value="4 sites, 1 N-linked glycan (1 site), 1 O-linked glycan (1 site)"/>
</dbReference>
<dbReference type="iPTMnet" id="P06400"/>
<dbReference type="PhosphoSitePlus" id="P06400"/>
<dbReference type="BioMuta" id="RB1"/>
<dbReference type="DMDM" id="132164"/>
<dbReference type="CPTAC" id="CPTAC-1328"/>
<dbReference type="CPTAC" id="CPTAC-3251"/>
<dbReference type="CPTAC" id="CPTAC-3288"/>
<dbReference type="CPTAC" id="CPTAC-898"/>
<dbReference type="CPTAC" id="CPTAC-941"/>
<dbReference type="CPTAC" id="CPTAC-942"/>
<dbReference type="jPOST" id="P06400"/>
<dbReference type="MassIVE" id="P06400"/>
<dbReference type="PaxDb" id="9606-ENSP00000267163"/>
<dbReference type="PeptideAtlas" id="P06400"/>
<dbReference type="ProteomicsDB" id="51900"/>
<dbReference type="Pumba" id="P06400"/>
<dbReference type="Antibodypedia" id="3758">
    <property type="antibodies" value="3575 antibodies from 52 providers"/>
</dbReference>
<dbReference type="CPTC" id="P06400">
    <property type="antibodies" value="6 antibodies"/>
</dbReference>
<dbReference type="DNASU" id="5925"/>
<dbReference type="Ensembl" id="ENST00000267163.6">
    <property type="protein sequence ID" value="ENSP00000267163.4"/>
    <property type="gene ID" value="ENSG00000139687.17"/>
</dbReference>
<dbReference type="GeneID" id="5925"/>
<dbReference type="KEGG" id="hsa:5925"/>
<dbReference type="MANE-Select" id="ENST00000267163.6">
    <property type="protein sequence ID" value="ENSP00000267163.4"/>
    <property type="RefSeq nucleotide sequence ID" value="NM_000321.3"/>
    <property type="RefSeq protein sequence ID" value="NP_000312.2"/>
</dbReference>
<dbReference type="UCSC" id="uc001vcb.4">
    <property type="organism name" value="human"/>
</dbReference>
<dbReference type="AGR" id="HGNC:9884"/>
<dbReference type="CTD" id="5925"/>
<dbReference type="DisGeNET" id="5925"/>
<dbReference type="GeneCards" id="RB1"/>
<dbReference type="GeneReviews" id="RB1"/>
<dbReference type="HGNC" id="HGNC:9884">
    <property type="gene designation" value="RB1"/>
</dbReference>
<dbReference type="HPA" id="ENSG00000139687">
    <property type="expression patterns" value="Low tissue specificity"/>
</dbReference>
<dbReference type="MalaCards" id="RB1"/>
<dbReference type="MIM" id="109800">
    <property type="type" value="phenotype"/>
</dbReference>
<dbReference type="MIM" id="180200">
    <property type="type" value="phenotype"/>
</dbReference>
<dbReference type="MIM" id="259500">
    <property type="type" value="phenotype"/>
</dbReference>
<dbReference type="MIM" id="614041">
    <property type="type" value="gene"/>
</dbReference>
<dbReference type="neXtProt" id="NX_P06400"/>
<dbReference type="OpenTargets" id="ENSG00000139687"/>
<dbReference type="Orphanet" id="357027">
    <property type="disease" value="Hereditary retinoblastoma"/>
</dbReference>
<dbReference type="Orphanet" id="1587">
    <property type="disease" value="Monosomy 13q14 syndrome"/>
</dbReference>
<dbReference type="Orphanet" id="357034">
    <property type="disease" value="Non-hereditary retinoblastoma"/>
</dbReference>
<dbReference type="Orphanet" id="668">
    <property type="disease" value="Osteosarcoma"/>
</dbReference>
<dbReference type="Orphanet" id="70573">
    <property type="disease" value="Small cell lung cancer"/>
</dbReference>
<dbReference type="PharmGKB" id="PA295"/>
<dbReference type="VEuPathDB" id="HostDB:ENSG00000139687"/>
<dbReference type="eggNOG" id="KOG1010">
    <property type="taxonomic scope" value="Eukaryota"/>
</dbReference>
<dbReference type="GeneTree" id="ENSGT00950000183202"/>
<dbReference type="HOGENOM" id="CLU_015754_0_0_1"/>
<dbReference type="InParanoid" id="P06400"/>
<dbReference type="OMA" id="VKDIGCI"/>
<dbReference type="OrthoDB" id="844594at2759"/>
<dbReference type="PAN-GO" id="P06400">
    <property type="GO annotations" value="7 GO annotations based on evolutionary models"/>
</dbReference>
<dbReference type="PhylomeDB" id="P06400"/>
<dbReference type="TreeFam" id="TF105568"/>
<dbReference type="PathwayCommons" id="P06400"/>
<dbReference type="Reactome" id="R-HSA-113501">
    <property type="pathway name" value="Inhibition of replication initiation of damaged DNA by RB1/E2F1"/>
</dbReference>
<dbReference type="Reactome" id="R-HSA-174178">
    <property type="pathway name" value="APC/C:Cdh1 mediated degradation of Cdc20 and other APC/C:Cdh1 targeted proteins in late mitosis/early G1"/>
</dbReference>
<dbReference type="Reactome" id="R-HSA-2299718">
    <property type="pathway name" value="Condensation of Prophase Chromosomes"/>
</dbReference>
<dbReference type="Reactome" id="R-HSA-2559584">
    <property type="pathway name" value="Formation of Senescence-Associated Heterochromatin Foci (SAHF)"/>
</dbReference>
<dbReference type="Reactome" id="R-HSA-2559585">
    <property type="pathway name" value="Oncogene Induced Senescence"/>
</dbReference>
<dbReference type="Reactome" id="R-HSA-69200">
    <property type="pathway name" value="Phosphorylation of proteins involved in G1/S transition by active Cyclin E:Cdk2 complexes"/>
</dbReference>
<dbReference type="Reactome" id="R-HSA-69202">
    <property type="pathway name" value="Cyclin E associated events during G1/S transition"/>
</dbReference>
<dbReference type="Reactome" id="R-HSA-69231">
    <property type="pathway name" value="Cyclin D associated events in G1"/>
</dbReference>
<dbReference type="Reactome" id="R-HSA-69656">
    <property type="pathway name" value="Cyclin A:Cdk2-associated events at S phase entry"/>
</dbReference>
<dbReference type="Reactome" id="R-HSA-8940973">
    <property type="pathway name" value="RUNX2 regulates osteoblast differentiation"/>
</dbReference>
<dbReference type="Reactome" id="R-HSA-9661069">
    <property type="pathway name" value="Defective binding of RB1 mutants to E2F1,(E2F2, E2F3)"/>
</dbReference>
<dbReference type="Reactome" id="R-HSA-9661070">
    <property type="pathway name" value="Defective translocation of RB1 mutants to the nucleus"/>
</dbReference>
<dbReference type="Reactome" id="R-HSA-9682706">
    <property type="pathway name" value="Replication of the SARS-CoV-1 genome"/>
</dbReference>
<dbReference type="Reactome" id="R-HSA-9687136">
    <property type="pathway name" value="Aberrant regulation of mitotic exit in cancer due to RB1 defects"/>
</dbReference>
<dbReference type="Reactome" id="R-HSA-9694686">
    <property type="pathway name" value="Replication of the SARS-CoV-2 genome"/>
</dbReference>
<dbReference type="Reactome" id="R-HSA-9725371">
    <property type="pathway name" value="Nuclear events stimulated by ALK signaling in cancer"/>
</dbReference>
<dbReference type="Reactome" id="R-HSA-9841922">
    <property type="pathway name" value="MLL4 and MLL3 complexes regulate expression of PPARG target genes in adipogenesis and hepatic steatosis"/>
</dbReference>
<dbReference type="SignaLink" id="P06400"/>
<dbReference type="SIGNOR" id="P06400"/>
<dbReference type="BioGRID-ORCS" id="5925">
    <property type="hits" value="32 hits in 1194 CRISPR screens"/>
</dbReference>
<dbReference type="CD-CODE" id="8C2F96ED">
    <property type="entry name" value="Centrosome"/>
</dbReference>
<dbReference type="ChiTaRS" id="RB1">
    <property type="organism name" value="human"/>
</dbReference>
<dbReference type="EvolutionaryTrace" id="P06400"/>
<dbReference type="GeneWiki" id="Retinoblastoma_protein"/>
<dbReference type="GenomeRNAi" id="5925"/>
<dbReference type="Pharos" id="P06400">
    <property type="development level" value="Tchem"/>
</dbReference>
<dbReference type="PRO" id="PR:P06400"/>
<dbReference type="Proteomes" id="UP000005640">
    <property type="component" value="Chromosome 13"/>
</dbReference>
<dbReference type="RNAct" id="P06400">
    <property type="molecule type" value="protein"/>
</dbReference>
<dbReference type="Bgee" id="ENSG00000139687">
    <property type="expression patterns" value="Expressed in epithelium of nasopharynx and 200 other cell types or tissues"/>
</dbReference>
<dbReference type="ExpressionAtlas" id="P06400">
    <property type="expression patterns" value="baseline and differential"/>
</dbReference>
<dbReference type="GO" id="GO:0000785">
    <property type="term" value="C:chromatin"/>
    <property type="evidence" value="ECO:0000318"/>
    <property type="project" value="GO_Central"/>
</dbReference>
<dbReference type="GO" id="GO:0061793">
    <property type="term" value="C:chromatin lock complex"/>
    <property type="evidence" value="ECO:0000353"/>
    <property type="project" value="ComplexPortal"/>
</dbReference>
<dbReference type="GO" id="GO:0005737">
    <property type="term" value="C:cytoplasm"/>
    <property type="evidence" value="ECO:0000250"/>
    <property type="project" value="UniProtKB"/>
</dbReference>
<dbReference type="GO" id="GO:0005829">
    <property type="term" value="C:cytosol"/>
    <property type="evidence" value="ECO:0000304"/>
    <property type="project" value="Reactome"/>
</dbReference>
<dbReference type="GO" id="GO:0005654">
    <property type="term" value="C:nucleoplasm"/>
    <property type="evidence" value="ECO:0000314"/>
    <property type="project" value="CAFA"/>
</dbReference>
<dbReference type="GO" id="GO:0005634">
    <property type="term" value="C:nucleus"/>
    <property type="evidence" value="ECO:0000314"/>
    <property type="project" value="UniProtKB"/>
</dbReference>
<dbReference type="GO" id="GO:0016605">
    <property type="term" value="C:PML body"/>
    <property type="evidence" value="ECO:0000314"/>
    <property type="project" value="UniProtKB"/>
</dbReference>
<dbReference type="GO" id="GO:0035189">
    <property type="term" value="C:Rb-E2F complex"/>
    <property type="evidence" value="ECO:0000314"/>
    <property type="project" value="CAFA"/>
</dbReference>
<dbReference type="GO" id="GO:0005819">
    <property type="term" value="C:spindle"/>
    <property type="evidence" value="ECO:0007669"/>
    <property type="project" value="Ensembl"/>
</dbReference>
<dbReference type="GO" id="GO:0016514">
    <property type="term" value="C:SWI/SNF complex"/>
    <property type="evidence" value="ECO:0000304"/>
    <property type="project" value="BHF-UCL"/>
</dbReference>
<dbReference type="GO" id="GO:0097718">
    <property type="term" value="F:disordered domain specific binding"/>
    <property type="evidence" value="ECO:0000353"/>
    <property type="project" value="CAFA"/>
</dbReference>
<dbReference type="GO" id="GO:0140297">
    <property type="term" value="F:DNA-binding transcription factor binding"/>
    <property type="evidence" value="ECO:0000353"/>
    <property type="project" value="UniProtKB"/>
</dbReference>
<dbReference type="GO" id="GO:0042802">
    <property type="term" value="F:identical protein binding"/>
    <property type="evidence" value="ECO:0000353"/>
    <property type="project" value="IntAct"/>
</dbReference>
<dbReference type="GO" id="GO:0061676">
    <property type="term" value="F:importin-alpha family protein binding"/>
    <property type="evidence" value="ECO:0000353"/>
    <property type="project" value="CAFA"/>
</dbReference>
<dbReference type="GO" id="GO:0019900">
    <property type="term" value="F:kinase binding"/>
    <property type="evidence" value="ECO:0000314"/>
    <property type="project" value="UniProtKB"/>
</dbReference>
<dbReference type="GO" id="GO:0060090">
    <property type="term" value="F:molecular adaptor activity"/>
    <property type="evidence" value="ECO:0000269"/>
    <property type="project" value="DisProt"/>
</dbReference>
<dbReference type="GO" id="GO:0051219">
    <property type="term" value="F:phosphoprotein binding"/>
    <property type="evidence" value="ECO:0000353"/>
    <property type="project" value="UniProtKB"/>
</dbReference>
<dbReference type="GO" id="GO:0000977">
    <property type="term" value="F:RNA polymerase II transcription regulatory region sequence-specific DNA binding"/>
    <property type="evidence" value="ECO:0000318"/>
    <property type="project" value="GO_Central"/>
</dbReference>
<dbReference type="GO" id="GO:0061629">
    <property type="term" value="F:RNA polymerase II-specific DNA-binding transcription factor binding"/>
    <property type="evidence" value="ECO:0007669"/>
    <property type="project" value="Ensembl"/>
</dbReference>
<dbReference type="GO" id="GO:0003714">
    <property type="term" value="F:transcription corepressor activity"/>
    <property type="evidence" value="ECO:0000304"/>
    <property type="project" value="ARUK-UCL"/>
</dbReference>
<dbReference type="GO" id="GO:0031625">
    <property type="term" value="F:ubiquitin protein ligase binding"/>
    <property type="evidence" value="ECO:0000353"/>
    <property type="project" value="UniProtKB"/>
</dbReference>
<dbReference type="GO" id="GO:0003180">
    <property type="term" value="P:aortic valve morphogenesis"/>
    <property type="evidence" value="ECO:0000250"/>
    <property type="project" value="BHF-UCL"/>
</dbReference>
<dbReference type="GO" id="GO:0030154">
    <property type="term" value="P:cell differentiation"/>
    <property type="evidence" value="ECO:0000318"/>
    <property type="project" value="GO_Central"/>
</dbReference>
<dbReference type="GO" id="GO:0051301">
    <property type="term" value="P:cell division"/>
    <property type="evidence" value="ECO:0007669"/>
    <property type="project" value="Ensembl"/>
</dbReference>
<dbReference type="GO" id="GO:0048667">
    <property type="term" value="P:cell morphogenesis involved in neuron differentiation"/>
    <property type="evidence" value="ECO:0000318"/>
    <property type="project" value="GO_Central"/>
</dbReference>
<dbReference type="GO" id="GO:0032869">
    <property type="term" value="P:cellular response to insulin stimulus"/>
    <property type="evidence" value="ECO:0007669"/>
    <property type="project" value="Ensembl"/>
</dbReference>
<dbReference type="GO" id="GO:0071466">
    <property type="term" value="P:cellular response to xenobiotic stimulus"/>
    <property type="evidence" value="ECO:0007669"/>
    <property type="project" value="Ensembl"/>
</dbReference>
<dbReference type="GO" id="GO:0002062">
    <property type="term" value="P:chondrocyte differentiation"/>
    <property type="evidence" value="ECO:0007669"/>
    <property type="project" value="Ensembl"/>
</dbReference>
<dbReference type="GO" id="GO:0006338">
    <property type="term" value="P:chromatin remodeling"/>
    <property type="evidence" value="ECO:0000304"/>
    <property type="project" value="BHF-UCL"/>
</dbReference>
<dbReference type="GO" id="GO:0051276">
    <property type="term" value="P:chromosome organization"/>
    <property type="evidence" value="ECO:0000315"/>
    <property type="project" value="BHF-UCL"/>
</dbReference>
<dbReference type="GO" id="GO:0048565">
    <property type="term" value="P:digestive tract development"/>
    <property type="evidence" value="ECO:0007669"/>
    <property type="project" value="Ensembl"/>
</dbReference>
<dbReference type="GO" id="GO:0043353">
    <property type="term" value="P:enucleate erythrocyte differentiation"/>
    <property type="evidence" value="ECO:0007669"/>
    <property type="project" value="Ensembl"/>
</dbReference>
<dbReference type="GO" id="GO:0050673">
    <property type="term" value="P:epithelial cell proliferation"/>
    <property type="evidence" value="ECO:0007669"/>
    <property type="project" value="Ensembl"/>
</dbReference>
<dbReference type="GO" id="GO:0000082">
    <property type="term" value="P:G1/S transition of mitotic cell cycle"/>
    <property type="evidence" value="ECO:0007669"/>
    <property type="project" value="Ensembl"/>
</dbReference>
<dbReference type="GO" id="GO:0034349">
    <property type="term" value="P:glial cell apoptotic process"/>
    <property type="evidence" value="ECO:0007669"/>
    <property type="project" value="Ensembl"/>
</dbReference>
<dbReference type="GO" id="GO:0014009">
    <property type="term" value="P:glial cell proliferation"/>
    <property type="evidence" value="ECO:0007669"/>
    <property type="project" value="Ensembl"/>
</dbReference>
<dbReference type="GO" id="GO:0097284">
    <property type="term" value="P:hepatocyte apoptotic process"/>
    <property type="evidence" value="ECO:0007669"/>
    <property type="project" value="Ensembl"/>
</dbReference>
<dbReference type="GO" id="GO:0031507">
    <property type="term" value="P:heterochromatin formation"/>
    <property type="evidence" value="ECO:0000314"/>
    <property type="project" value="ComplexPortal"/>
</dbReference>
<dbReference type="GO" id="GO:0034088">
    <property type="term" value="P:maintenance of mitotic sister chromatid cohesion"/>
    <property type="evidence" value="ECO:0000315"/>
    <property type="project" value="BHF-UCL"/>
</dbReference>
<dbReference type="GO" id="GO:0045445">
    <property type="term" value="P:myoblast differentiation"/>
    <property type="evidence" value="ECO:0000315"/>
    <property type="project" value="UniProtKB"/>
</dbReference>
<dbReference type="GO" id="GO:2001234">
    <property type="term" value="P:negative regulation of apoptotic signaling pathway"/>
    <property type="evidence" value="ECO:0000250"/>
    <property type="project" value="ARUK-UCL"/>
</dbReference>
<dbReference type="GO" id="GO:0045786">
    <property type="term" value="P:negative regulation of cell cycle"/>
    <property type="evidence" value="ECO:0000250"/>
    <property type="project" value="ARUK-UCL"/>
</dbReference>
<dbReference type="GO" id="GO:0030308">
    <property type="term" value="P:negative regulation of cell growth"/>
    <property type="evidence" value="ECO:0000250"/>
    <property type="project" value="UniProtKB"/>
</dbReference>
<dbReference type="GO" id="GO:0120163">
    <property type="term" value="P:negative regulation of cold-induced thermogenesis"/>
    <property type="evidence" value="ECO:0000250"/>
    <property type="project" value="YuBioLab"/>
</dbReference>
<dbReference type="GO" id="GO:0043433">
    <property type="term" value="P:negative regulation of DNA-binding transcription factor activity"/>
    <property type="evidence" value="ECO:0000304"/>
    <property type="project" value="BHF-UCL"/>
</dbReference>
<dbReference type="GO" id="GO:0045892">
    <property type="term" value="P:negative regulation of DNA-templated transcription"/>
    <property type="evidence" value="ECO:0000314"/>
    <property type="project" value="UniProtKB"/>
</dbReference>
<dbReference type="GO" id="GO:0050680">
    <property type="term" value="P:negative regulation of epithelial cell proliferation"/>
    <property type="evidence" value="ECO:0007669"/>
    <property type="project" value="Ensembl"/>
</dbReference>
<dbReference type="GO" id="GO:2000134">
    <property type="term" value="P:negative regulation of G1/S transition of mitotic cell cycle"/>
    <property type="evidence" value="ECO:0000318"/>
    <property type="project" value="GO_Central"/>
</dbReference>
<dbReference type="GO" id="GO:0010629">
    <property type="term" value="P:negative regulation of gene expression"/>
    <property type="evidence" value="ECO:0000315"/>
    <property type="project" value="MGI"/>
</dbReference>
<dbReference type="GO" id="GO:0060253">
    <property type="term" value="P:negative regulation of glial cell proliferation"/>
    <property type="evidence" value="ECO:0007669"/>
    <property type="project" value="Ensembl"/>
</dbReference>
<dbReference type="GO" id="GO:1903944">
    <property type="term" value="P:negative regulation of hepatocyte apoptotic process"/>
    <property type="evidence" value="ECO:0007669"/>
    <property type="project" value="Ensembl"/>
</dbReference>
<dbReference type="GO" id="GO:0050728">
    <property type="term" value="P:negative regulation of inflammatory response"/>
    <property type="evidence" value="ECO:0000250"/>
    <property type="project" value="BHF-UCL"/>
</dbReference>
<dbReference type="GO" id="GO:1904761">
    <property type="term" value="P:negative regulation of myofibroblast differentiation"/>
    <property type="evidence" value="ECO:0000250"/>
    <property type="project" value="BHF-UCL"/>
</dbReference>
<dbReference type="GO" id="GO:0006469">
    <property type="term" value="P:negative regulation of protein kinase activity"/>
    <property type="evidence" value="ECO:0000353"/>
    <property type="project" value="UniProtKB"/>
</dbReference>
<dbReference type="GO" id="GO:0045879">
    <property type="term" value="P:negative regulation of smoothened signaling pathway"/>
    <property type="evidence" value="ECO:0007669"/>
    <property type="project" value="Ensembl"/>
</dbReference>
<dbReference type="GO" id="GO:0000122">
    <property type="term" value="P:negative regulation of transcription by RNA polymerase II"/>
    <property type="evidence" value="ECO:0000304"/>
    <property type="project" value="BHF-UCL"/>
</dbReference>
<dbReference type="GO" id="GO:0051402">
    <property type="term" value="P:neuron apoptotic process"/>
    <property type="evidence" value="ECO:0007669"/>
    <property type="project" value="Ensembl"/>
</dbReference>
<dbReference type="GO" id="GO:0042551">
    <property type="term" value="P:neuron maturation"/>
    <property type="evidence" value="ECO:0007669"/>
    <property type="project" value="Ensembl"/>
</dbReference>
<dbReference type="GO" id="GO:0031175">
    <property type="term" value="P:neuron projection development"/>
    <property type="evidence" value="ECO:0000318"/>
    <property type="project" value="GO_Central"/>
</dbReference>
<dbReference type="GO" id="GO:1904028">
    <property type="term" value="P:positive regulation of collagen fibril organization"/>
    <property type="evidence" value="ECO:0000250"/>
    <property type="project" value="BHF-UCL"/>
</dbReference>
<dbReference type="GO" id="GO:1903055">
    <property type="term" value="P:positive regulation of extracellular matrix organization"/>
    <property type="evidence" value="ECO:0000250"/>
    <property type="project" value="BHF-UCL"/>
</dbReference>
<dbReference type="GO" id="GO:0045651">
    <property type="term" value="P:positive regulation of macrophage differentiation"/>
    <property type="evidence" value="ECO:0007669"/>
    <property type="project" value="Ensembl"/>
</dbReference>
<dbReference type="GO" id="GO:0045842">
    <property type="term" value="P:positive regulation of mitotic metaphase/anaphase transition"/>
    <property type="evidence" value="ECO:0000315"/>
    <property type="project" value="BHF-UCL"/>
</dbReference>
<dbReference type="GO" id="GO:0045944">
    <property type="term" value="P:positive regulation of transcription by RNA polymerase II"/>
    <property type="evidence" value="ECO:0007669"/>
    <property type="project" value="Ensembl"/>
</dbReference>
<dbReference type="GO" id="GO:2000679">
    <property type="term" value="P:positive regulation of transcription regulatory region DNA binding"/>
    <property type="evidence" value="ECO:0000314"/>
    <property type="project" value="MGI"/>
</dbReference>
<dbReference type="GO" id="GO:0071459">
    <property type="term" value="P:protein localization to chromosome, centromeric region"/>
    <property type="evidence" value="ECO:0000315"/>
    <property type="project" value="BHF-UCL"/>
</dbReference>
<dbReference type="GO" id="GO:0007265">
    <property type="term" value="P:Ras protein signal transduction"/>
    <property type="evidence" value="ECO:0000270"/>
    <property type="project" value="BHF-UCL"/>
</dbReference>
<dbReference type="GO" id="GO:0051726">
    <property type="term" value="P:regulation of cell cycle"/>
    <property type="evidence" value="ECO:0000304"/>
    <property type="project" value="BHF-UCL"/>
</dbReference>
<dbReference type="GO" id="GO:0090230">
    <property type="term" value="P:regulation of centromere complex assembly"/>
    <property type="evidence" value="ECO:0000304"/>
    <property type="project" value="BHF-UCL"/>
</dbReference>
<dbReference type="GO" id="GO:0006355">
    <property type="term" value="P:regulation of DNA-templated transcription"/>
    <property type="evidence" value="ECO:0000314"/>
    <property type="project" value="ComplexPortal"/>
</dbReference>
<dbReference type="GO" id="GO:0043550">
    <property type="term" value="P:regulation of lipid kinase activity"/>
    <property type="evidence" value="ECO:0000314"/>
    <property type="project" value="UniProtKB"/>
</dbReference>
<dbReference type="GO" id="GO:0007346">
    <property type="term" value="P:regulation of mitotic cell cycle"/>
    <property type="evidence" value="ECO:0000315"/>
    <property type="project" value="BHF-UCL"/>
</dbReference>
<dbReference type="GO" id="GO:0031134">
    <property type="term" value="P:sister chromatid biorientation"/>
    <property type="evidence" value="ECO:0000315"/>
    <property type="project" value="BHF-UCL"/>
</dbReference>
<dbReference type="GO" id="GO:0035914">
    <property type="term" value="P:skeletal muscle cell differentiation"/>
    <property type="evidence" value="ECO:0007669"/>
    <property type="project" value="Ensembl"/>
</dbReference>
<dbReference type="GO" id="GO:0007224">
    <property type="term" value="P:smoothened signaling pathway"/>
    <property type="evidence" value="ECO:0007669"/>
    <property type="project" value="Ensembl"/>
</dbReference>
<dbReference type="GO" id="GO:0007283">
    <property type="term" value="P:spermatogenesis"/>
    <property type="evidence" value="ECO:0007669"/>
    <property type="project" value="Ensembl"/>
</dbReference>
<dbReference type="GO" id="GO:0051146">
    <property type="term" value="P:striated muscle cell differentiation"/>
    <property type="evidence" value="ECO:0007669"/>
    <property type="project" value="Ensembl"/>
</dbReference>
<dbReference type="GO" id="GO:0001894">
    <property type="term" value="P:tissue homeostasis"/>
    <property type="evidence" value="ECO:0007669"/>
    <property type="project" value="Ensembl"/>
</dbReference>
<dbReference type="GO" id="GO:0006366">
    <property type="term" value="P:transcription by RNA polymerase II"/>
    <property type="evidence" value="ECO:0007669"/>
    <property type="project" value="Ensembl"/>
</dbReference>
<dbReference type="CDD" id="cd20599">
    <property type="entry name" value="CYCLIN_RB"/>
    <property type="match status" value="1"/>
</dbReference>
<dbReference type="DisProt" id="DP01426"/>
<dbReference type="FunFam" id="1.10.472.10:FF:000039">
    <property type="entry name" value="RB transcriptional corepressor 1"/>
    <property type="match status" value="1"/>
</dbReference>
<dbReference type="FunFam" id="1.10.472.140:FF:000002">
    <property type="entry name" value="RB transcriptional corepressor 1"/>
    <property type="match status" value="1"/>
</dbReference>
<dbReference type="FunFam" id="1.10.472.10:FF:000033">
    <property type="entry name" value="retinoblastoma-associated protein isoform X1"/>
    <property type="match status" value="1"/>
</dbReference>
<dbReference type="Gene3D" id="1.10.472.140">
    <property type="match status" value="1"/>
</dbReference>
<dbReference type="Gene3D" id="6.10.140.1380">
    <property type="match status" value="1"/>
</dbReference>
<dbReference type="Gene3D" id="6.10.250.530">
    <property type="match status" value="1"/>
</dbReference>
<dbReference type="Gene3D" id="1.10.472.10">
    <property type="entry name" value="Cyclin-like"/>
    <property type="match status" value="2"/>
</dbReference>
<dbReference type="IDEAL" id="IID00017"/>
<dbReference type="InterPro" id="IPR013763">
    <property type="entry name" value="Cyclin-like_dom"/>
</dbReference>
<dbReference type="InterPro" id="IPR036915">
    <property type="entry name" value="Cyclin-like_sf"/>
</dbReference>
<dbReference type="InterPro" id="IPR002720">
    <property type="entry name" value="RB_A"/>
</dbReference>
<dbReference type="InterPro" id="IPR002719">
    <property type="entry name" value="RB_B"/>
</dbReference>
<dbReference type="InterPro" id="IPR015030">
    <property type="entry name" value="RB_C"/>
</dbReference>
<dbReference type="InterPro" id="IPR028309">
    <property type="entry name" value="RB_fam"/>
</dbReference>
<dbReference type="InterPro" id="IPR024599">
    <property type="entry name" value="RB_N"/>
</dbReference>
<dbReference type="PANTHER" id="PTHR13742:SF36">
    <property type="entry name" value="RETINOBLASTOMA-ASSOCIATED PROTEIN"/>
    <property type="match status" value="1"/>
</dbReference>
<dbReference type="PANTHER" id="PTHR13742">
    <property type="entry name" value="RETINOBLASTOMA-ASSOCIATED PROTEIN RB -RELATED"/>
    <property type="match status" value="1"/>
</dbReference>
<dbReference type="Pfam" id="PF11934">
    <property type="entry name" value="DUF3452"/>
    <property type="match status" value="1"/>
</dbReference>
<dbReference type="Pfam" id="PF01858">
    <property type="entry name" value="RB_A"/>
    <property type="match status" value="1"/>
</dbReference>
<dbReference type="Pfam" id="PF01857">
    <property type="entry name" value="RB_B"/>
    <property type="match status" value="1"/>
</dbReference>
<dbReference type="Pfam" id="PF08934">
    <property type="entry name" value="Rb_C"/>
    <property type="match status" value="1"/>
</dbReference>
<dbReference type="SMART" id="SM00385">
    <property type="entry name" value="CYCLIN"/>
    <property type="match status" value="1"/>
</dbReference>
<dbReference type="SMART" id="SM01367">
    <property type="entry name" value="DUF3452"/>
    <property type="match status" value="1"/>
</dbReference>
<dbReference type="SMART" id="SM01368">
    <property type="entry name" value="RB_A"/>
    <property type="match status" value="1"/>
</dbReference>
<dbReference type="SMART" id="SM01369">
    <property type="entry name" value="Rb_C"/>
    <property type="match status" value="1"/>
</dbReference>
<dbReference type="SUPFAM" id="SSF47954">
    <property type="entry name" value="Cyclin-like"/>
    <property type="match status" value="2"/>
</dbReference>
<organism>
    <name type="scientific">Homo sapiens</name>
    <name type="common">Human</name>
    <dbReference type="NCBI Taxonomy" id="9606"/>
    <lineage>
        <taxon>Eukaryota</taxon>
        <taxon>Metazoa</taxon>
        <taxon>Chordata</taxon>
        <taxon>Craniata</taxon>
        <taxon>Vertebrata</taxon>
        <taxon>Euteleostomi</taxon>
        <taxon>Mammalia</taxon>
        <taxon>Eutheria</taxon>
        <taxon>Euarchontoglires</taxon>
        <taxon>Primates</taxon>
        <taxon>Haplorrhini</taxon>
        <taxon>Catarrhini</taxon>
        <taxon>Hominidae</taxon>
        <taxon>Homo</taxon>
    </lineage>
</organism>
<sequence>MPPKTPRKTAATAAAAAAEPPAPPPPPPPEEDPEQDSGPEDLPLVRLEFEETEEPDFTALCQKLKIPDHVRERAWLTWEKVSSVDGVLGGYIQKKKELWGICIFIAAVDLDEMSFTFTELQKNIEISVHKFFNLLKEIDTSTKVDNAMSRLLKKYDVLFALFSKLERTCELIYLTQPSSSISTEINSALVLKVSWITFLLAKGEVLQMEDDLVISFQLMLCVLDYFIKLSPPMLLKEPYKTAVIPINGSPRTPRRGQNRSARIAKQLENDTRIIEVLCKEHECNIDEVKNVYFKNFIPFMNSLGLVTSNGLPEVENLSKRYEEIYLKNKDLDARLFLDHDKTLQTDSIDSFETQRTPRKSNLDEEVNVIPPHTPVRTVMNTIQQLMMILNSASDQPSENLISYFNNCTVNPKESILKRVKDIGYIFKEKFAKAVGQGCVEIGSQRYKLGVRLYYRVMESMLKSEEERLSIQNFSKLLNDNIFHMSLLACALEVVMATYSRSTSQNLDSGTDLSFPWILNVLNLKAFDFYKVIESFIKAEGNLTREMIKHLERCEHRIMESLAWLSDSPLFDLIKQSKDREGPTDHLESACPLNLPLQNNHTAADMYLSPVRSPKKKGSTTRVNSTANAETQATSAFQTQKPLKSTSLSLFYKKVYRLAYLRLNTLCERLLSEHPELEHIIWTLFQHTLQNEYELMRDRHLDQIMMCSMYGICKVKNIDLKFKIIVTAYKDLPHAVQETFKRVLIKEEEYDSIIVFYNSVFMQRLKTNILQYASTRPPTLSPIPHIPRSPYKFPSSPLRIPGGNIYISPLKSPYKISEGLPTPTKMTPRSRILVSIGESFGTSEKFQKINQMVCNSDRVLKRSAEGSNPPKPLKKLRFDIEGSDEADGSKHLPGESKFQQKLAEMTSTRTRMQKQKMNDSMDTSNKEEK</sequence>
<protein>
    <recommendedName>
        <fullName>Retinoblastoma-associated protein</fullName>
    </recommendedName>
    <alternativeName>
        <fullName>p105-Rb</fullName>
    </alternativeName>
    <alternativeName>
        <fullName evidence="69">p110-RB1</fullName>
    </alternativeName>
    <alternativeName>
        <fullName>pRb</fullName>
        <shortName>Rb</shortName>
    </alternativeName>
    <alternativeName>
        <fullName>pp110</fullName>
    </alternativeName>
</protein>
<gene>
    <name type="primary">RB1</name>
</gene>